<comment type="function">
    <text evidence="6 10">This protein binds to 23S rRNA in the presence of protein L20.</text>
</comment>
<comment type="subunit">
    <text evidence="2 3 4 5 6 7 8 9 10">Part of the 50S ribosomal subunit (PubMed:10094780, PubMed:16272117, PubMed:24844575, PubMed:25310980, PubMed:27906160, PubMed:27906161, PubMed:27934701, PubMed:387076). Contacts protein L20 (PubMed:2665813, PubMed:6170935).</text>
</comment>
<comment type="mass spectrometry"/>
<comment type="similarity">
    <text evidence="1">Belongs to the bacterial ribosomal protein bL21 family.</text>
</comment>
<keyword id="KW-0002">3D-structure</keyword>
<keyword id="KW-0903">Direct protein sequencing</keyword>
<keyword id="KW-1185">Reference proteome</keyword>
<keyword id="KW-0687">Ribonucleoprotein</keyword>
<keyword id="KW-0689">Ribosomal protein</keyword>
<keyword id="KW-0694">RNA-binding</keyword>
<keyword id="KW-0699">rRNA-binding</keyword>
<protein>
    <recommendedName>
        <fullName evidence="1 11">Large ribosomal subunit protein bL21</fullName>
    </recommendedName>
    <alternativeName>
        <fullName>50S ribosomal protein L21</fullName>
    </alternativeName>
</protein>
<dbReference type="EMBL" id="D13267">
    <property type="protein sequence ID" value="BAA02525.1"/>
    <property type="molecule type" value="Genomic_DNA"/>
</dbReference>
<dbReference type="EMBL" id="U18997">
    <property type="protein sequence ID" value="AAA57987.1"/>
    <property type="molecule type" value="Genomic_DNA"/>
</dbReference>
<dbReference type="EMBL" id="U00096">
    <property type="protein sequence ID" value="AAC76218.1"/>
    <property type="molecule type" value="Genomic_DNA"/>
</dbReference>
<dbReference type="EMBL" id="AP009048">
    <property type="protein sequence ID" value="BAE77230.1"/>
    <property type="molecule type" value="Genomic_DNA"/>
</dbReference>
<dbReference type="PIR" id="JS0766">
    <property type="entry name" value="R5EC21"/>
</dbReference>
<dbReference type="RefSeq" id="NP_417653.1">
    <property type="nucleotide sequence ID" value="NC_000913.3"/>
</dbReference>
<dbReference type="RefSeq" id="WP_000271401.1">
    <property type="nucleotide sequence ID" value="NZ_STEB01000012.1"/>
</dbReference>
<dbReference type="PDB" id="2J28">
    <property type="method" value="EM"/>
    <property type="resolution" value="8.00 A"/>
    <property type="chains" value="R=1-103"/>
</dbReference>
<dbReference type="PDB" id="2RDO">
    <property type="method" value="EM"/>
    <property type="resolution" value="9.10 A"/>
    <property type="chains" value="R=1-103"/>
</dbReference>
<dbReference type="PDB" id="3BBX">
    <property type="method" value="EM"/>
    <property type="resolution" value="10.00 A"/>
    <property type="chains" value="R=1-103"/>
</dbReference>
<dbReference type="PDB" id="3IY9">
    <property type="method" value="EM"/>
    <property type="resolution" value="14.10 A"/>
    <property type="chains" value="R=1-103"/>
</dbReference>
<dbReference type="PDB" id="3J5L">
    <property type="method" value="EM"/>
    <property type="resolution" value="6.60 A"/>
    <property type="chains" value="R=1-103"/>
</dbReference>
<dbReference type="PDB" id="3J7Z">
    <property type="method" value="EM"/>
    <property type="resolution" value="3.90 A"/>
    <property type="chains" value="R=1-103"/>
</dbReference>
<dbReference type="PDB" id="3J8G">
    <property type="method" value="EM"/>
    <property type="resolution" value="5.00 A"/>
    <property type="chains" value="R=1-103"/>
</dbReference>
<dbReference type="PDB" id="3J9Y">
    <property type="method" value="EM"/>
    <property type="resolution" value="3.90 A"/>
    <property type="chains" value="R=1-103"/>
</dbReference>
<dbReference type="PDB" id="3J9Z">
    <property type="method" value="EM"/>
    <property type="resolution" value="3.60 A"/>
    <property type="chains" value="LP=1-103"/>
</dbReference>
<dbReference type="PDB" id="3JA1">
    <property type="method" value="EM"/>
    <property type="resolution" value="3.60 A"/>
    <property type="chains" value="LT=1-103"/>
</dbReference>
<dbReference type="PDB" id="3JBU">
    <property type="method" value="EM"/>
    <property type="resolution" value="3.64 A"/>
    <property type="chains" value="r=1-103"/>
</dbReference>
<dbReference type="PDB" id="3JBV">
    <property type="method" value="EM"/>
    <property type="resolution" value="3.32 A"/>
    <property type="chains" value="r=1-103"/>
</dbReference>
<dbReference type="PDB" id="3JCD">
    <property type="method" value="EM"/>
    <property type="resolution" value="3.70 A"/>
    <property type="chains" value="R=1-103"/>
</dbReference>
<dbReference type="PDB" id="3JCE">
    <property type="method" value="EM"/>
    <property type="resolution" value="3.20 A"/>
    <property type="chains" value="R=1-103"/>
</dbReference>
<dbReference type="PDB" id="3JCJ">
    <property type="method" value="EM"/>
    <property type="resolution" value="3.70 A"/>
    <property type="chains" value="Q=1-103"/>
</dbReference>
<dbReference type="PDB" id="3JCN">
    <property type="method" value="EM"/>
    <property type="resolution" value="4.60 A"/>
    <property type="chains" value="R=1-103"/>
</dbReference>
<dbReference type="PDB" id="4CSU">
    <property type="method" value="EM"/>
    <property type="resolution" value="5.50 A"/>
    <property type="chains" value="R=1-103"/>
</dbReference>
<dbReference type="PDB" id="4U1U">
    <property type="method" value="X-ray"/>
    <property type="resolution" value="2.95 A"/>
    <property type="chains" value="BR/DR=1-103"/>
</dbReference>
<dbReference type="PDB" id="4U1V">
    <property type="method" value="X-ray"/>
    <property type="resolution" value="3.00 A"/>
    <property type="chains" value="BR/DR=1-103"/>
</dbReference>
<dbReference type="PDB" id="4U20">
    <property type="method" value="X-ray"/>
    <property type="resolution" value="2.90 A"/>
    <property type="chains" value="BR/DR=1-103"/>
</dbReference>
<dbReference type="PDB" id="4U24">
    <property type="method" value="X-ray"/>
    <property type="resolution" value="2.90 A"/>
    <property type="chains" value="BR/DR=1-103"/>
</dbReference>
<dbReference type="PDB" id="4U25">
    <property type="method" value="X-ray"/>
    <property type="resolution" value="2.90 A"/>
    <property type="chains" value="BR/DR=1-103"/>
</dbReference>
<dbReference type="PDB" id="4U26">
    <property type="method" value="X-ray"/>
    <property type="resolution" value="2.80 A"/>
    <property type="chains" value="BR/DR=1-103"/>
</dbReference>
<dbReference type="PDB" id="4U27">
    <property type="method" value="X-ray"/>
    <property type="resolution" value="2.80 A"/>
    <property type="chains" value="BR/DR=1-103"/>
</dbReference>
<dbReference type="PDB" id="4UY8">
    <property type="method" value="EM"/>
    <property type="resolution" value="3.80 A"/>
    <property type="chains" value="R=1-103"/>
</dbReference>
<dbReference type="PDB" id="4V4H">
    <property type="method" value="X-ray"/>
    <property type="resolution" value="3.46 A"/>
    <property type="chains" value="BR/DR=1-103"/>
</dbReference>
<dbReference type="PDB" id="4V4Q">
    <property type="method" value="X-ray"/>
    <property type="resolution" value="3.46 A"/>
    <property type="chains" value="BR/DR=1-103"/>
</dbReference>
<dbReference type="PDB" id="4V50">
    <property type="method" value="X-ray"/>
    <property type="resolution" value="3.22 A"/>
    <property type="chains" value="BR/DR=1-103"/>
</dbReference>
<dbReference type="PDB" id="4V52">
    <property type="method" value="X-ray"/>
    <property type="resolution" value="3.21 A"/>
    <property type="chains" value="BR/DR=1-103"/>
</dbReference>
<dbReference type="PDB" id="4V53">
    <property type="method" value="X-ray"/>
    <property type="resolution" value="3.54 A"/>
    <property type="chains" value="BR/DR=1-103"/>
</dbReference>
<dbReference type="PDB" id="4V54">
    <property type="method" value="X-ray"/>
    <property type="resolution" value="3.30 A"/>
    <property type="chains" value="BR/DR=1-103"/>
</dbReference>
<dbReference type="PDB" id="4V55">
    <property type="method" value="X-ray"/>
    <property type="resolution" value="4.00 A"/>
    <property type="chains" value="BR/DR=1-103"/>
</dbReference>
<dbReference type="PDB" id="4V56">
    <property type="method" value="X-ray"/>
    <property type="resolution" value="3.93 A"/>
    <property type="chains" value="BR/DR=1-103"/>
</dbReference>
<dbReference type="PDB" id="4V57">
    <property type="method" value="X-ray"/>
    <property type="resolution" value="3.50 A"/>
    <property type="chains" value="BR/DR=1-103"/>
</dbReference>
<dbReference type="PDB" id="4V5B">
    <property type="method" value="X-ray"/>
    <property type="resolution" value="3.74 A"/>
    <property type="chains" value="AR/CR=1-103"/>
</dbReference>
<dbReference type="PDB" id="4V5H">
    <property type="method" value="EM"/>
    <property type="resolution" value="5.80 A"/>
    <property type="chains" value="BR=1-103"/>
</dbReference>
<dbReference type="PDB" id="4V5Y">
    <property type="method" value="X-ray"/>
    <property type="resolution" value="4.45 A"/>
    <property type="chains" value="BR/DR=1-103"/>
</dbReference>
<dbReference type="PDB" id="4V64">
    <property type="method" value="X-ray"/>
    <property type="resolution" value="3.50 A"/>
    <property type="chains" value="BR/DR=1-103"/>
</dbReference>
<dbReference type="PDB" id="4V65">
    <property type="method" value="EM"/>
    <property type="resolution" value="9.00 A"/>
    <property type="chains" value="BK=1-103"/>
</dbReference>
<dbReference type="PDB" id="4V66">
    <property type="method" value="EM"/>
    <property type="resolution" value="9.00 A"/>
    <property type="chains" value="BK=1-103"/>
</dbReference>
<dbReference type="PDB" id="4V69">
    <property type="method" value="EM"/>
    <property type="resolution" value="6.70 A"/>
    <property type="chains" value="BR=1-103"/>
</dbReference>
<dbReference type="PDB" id="4V6C">
    <property type="method" value="X-ray"/>
    <property type="resolution" value="3.19 A"/>
    <property type="chains" value="BR/DR=1-103"/>
</dbReference>
<dbReference type="PDB" id="4V6D">
    <property type="method" value="X-ray"/>
    <property type="resolution" value="3.81 A"/>
    <property type="chains" value="BR/DR=1-103"/>
</dbReference>
<dbReference type="PDB" id="4V6E">
    <property type="method" value="X-ray"/>
    <property type="resolution" value="3.71 A"/>
    <property type="chains" value="BR/DR=1-103"/>
</dbReference>
<dbReference type="PDB" id="4V6K">
    <property type="method" value="EM"/>
    <property type="resolution" value="8.25 A"/>
    <property type="chains" value="AS=1-103"/>
</dbReference>
<dbReference type="PDB" id="4V6L">
    <property type="method" value="EM"/>
    <property type="resolution" value="13.20 A"/>
    <property type="chains" value="BS=1-103"/>
</dbReference>
<dbReference type="PDB" id="4V6M">
    <property type="method" value="EM"/>
    <property type="resolution" value="7.10 A"/>
    <property type="chains" value="BR=1-103"/>
</dbReference>
<dbReference type="PDB" id="4V6N">
    <property type="method" value="EM"/>
    <property type="resolution" value="12.10 A"/>
    <property type="chains" value="AT=1-103"/>
</dbReference>
<dbReference type="PDB" id="4V6O">
    <property type="method" value="EM"/>
    <property type="resolution" value="14.70 A"/>
    <property type="chains" value="BT=1-103"/>
</dbReference>
<dbReference type="PDB" id="4V6P">
    <property type="method" value="EM"/>
    <property type="resolution" value="13.50 A"/>
    <property type="chains" value="BT=1-103"/>
</dbReference>
<dbReference type="PDB" id="4V6Q">
    <property type="method" value="EM"/>
    <property type="resolution" value="11.50 A"/>
    <property type="chains" value="BT=1-103"/>
</dbReference>
<dbReference type="PDB" id="4V6R">
    <property type="method" value="EM"/>
    <property type="resolution" value="11.50 A"/>
    <property type="chains" value="BT=1-103"/>
</dbReference>
<dbReference type="PDB" id="4V6S">
    <property type="method" value="EM"/>
    <property type="resolution" value="13.10 A"/>
    <property type="chains" value="AT=1-103"/>
</dbReference>
<dbReference type="PDB" id="4V6T">
    <property type="method" value="EM"/>
    <property type="resolution" value="8.30 A"/>
    <property type="chains" value="BR=1-103"/>
</dbReference>
<dbReference type="PDB" id="4V6V">
    <property type="method" value="EM"/>
    <property type="resolution" value="9.80 A"/>
    <property type="chains" value="BV=1-103"/>
</dbReference>
<dbReference type="PDB" id="4V6Y">
    <property type="method" value="EM"/>
    <property type="resolution" value="12.00 A"/>
    <property type="chains" value="BR=1-103"/>
</dbReference>
<dbReference type="PDB" id="4V6Z">
    <property type="method" value="EM"/>
    <property type="resolution" value="12.00 A"/>
    <property type="chains" value="BR=1-103"/>
</dbReference>
<dbReference type="PDB" id="4V70">
    <property type="method" value="EM"/>
    <property type="resolution" value="17.00 A"/>
    <property type="chains" value="BR=1-103"/>
</dbReference>
<dbReference type="PDB" id="4V71">
    <property type="method" value="EM"/>
    <property type="resolution" value="20.00 A"/>
    <property type="chains" value="BR=1-103"/>
</dbReference>
<dbReference type="PDB" id="4V72">
    <property type="method" value="EM"/>
    <property type="resolution" value="13.00 A"/>
    <property type="chains" value="BR=1-103"/>
</dbReference>
<dbReference type="PDB" id="4V73">
    <property type="method" value="EM"/>
    <property type="resolution" value="15.00 A"/>
    <property type="chains" value="BR=1-103"/>
</dbReference>
<dbReference type="PDB" id="4V74">
    <property type="method" value="EM"/>
    <property type="resolution" value="17.00 A"/>
    <property type="chains" value="BR=1-103"/>
</dbReference>
<dbReference type="PDB" id="4V75">
    <property type="method" value="EM"/>
    <property type="resolution" value="12.00 A"/>
    <property type="chains" value="BR=1-103"/>
</dbReference>
<dbReference type="PDB" id="4V76">
    <property type="method" value="EM"/>
    <property type="resolution" value="17.00 A"/>
    <property type="chains" value="BR=1-103"/>
</dbReference>
<dbReference type="PDB" id="4V77">
    <property type="method" value="EM"/>
    <property type="resolution" value="17.00 A"/>
    <property type="chains" value="BR=1-103"/>
</dbReference>
<dbReference type="PDB" id="4V78">
    <property type="method" value="EM"/>
    <property type="resolution" value="20.00 A"/>
    <property type="chains" value="BR=1-103"/>
</dbReference>
<dbReference type="PDB" id="4V79">
    <property type="method" value="EM"/>
    <property type="resolution" value="15.00 A"/>
    <property type="chains" value="BR=1-103"/>
</dbReference>
<dbReference type="PDB" id="4V7A">
    <property type="method" value="EM"/>
    <property type="resolution" value="9.00 A"/>
    <property type="chains" value="BR=1-103"/>
</dbReference>
<dbReference type="PDB" id="4V7B">
    <property type="method" value="EM"/>
    <property type="resolution" value="6.80 A"/>
    <property type="chains" value="BR=1-103"/>
</dbReference>
<dbReference type="PDB" id="4V7C">
    <property type="method" value="EM"/>
    <property type="resolution" value="7.60 A"/>
    <property type="chains" value="BT=1-103"/>
</dbReference>
<dbReference type="PDB" id="4V7D">
    <property type="method" value="EM"/>
    <property type="resolution" value="7.60 A"/>
    <property type="chains" value="AU=1-103"/>
</dbReference>
<dbReference type="PDB" id="4V7I">
    <property type="method" value="EM"/>
    <property type="resolution" value="9.60 A"/>
    <property type="chains" value="AR=1-103"/>
</dbReference>
<dbReference type="PDB" id="4V7S">
    <property type="method" value="X-ray"/>
    <property type="resolution" value="3.25 A"/>
    <property type="chains" value="BR/DR=1-103"/>
</dbReference>
<dbReference type="PDB" id="4V7T">
    <property type="method" value="X-ray"/>
    <property type="resolution" value="3.19 A"/>
    <property type="chains" value="BR/DR=1-103"/>
</dbReference>
<dbReference type="PDB" id="4V7U">
    <property type="method" value="X-ray"/>
    <property type="resolution" value="3.10 A"/>
    <property type="chains" value="BR/DR=1-103"/>
</dbReference>
<dbReference type="PDB" id="4V7V">
    <property type="method" value="X-ray"/>
    <property type="resolution" value="3.29 A"/>
    <property type="chains" value="BR/DR=1-103"/>
</dbReference>
<dbReference type="PDB" id="4V85">
    <property type="method" value="X-ray"/>
    <property type="resolution" value="3.20 A"/>
    <property type="chains" value="BV=1-103"/>
</dbReference>
<dbReference type="PDB" id="4V89">
    <property type="method" value="X-ray"/>
    <property type="resolution" value="3.70 A"/>
    <property type="chains" value="BV=1-103"/>
</dbReference>
<dbReference type="PDB" id="4V9C">
    <property type="method" value="X-ray"/>
    <property type="resolution" value="3.30 A"/>
    <property type="chains" value="BR/DR=1-103"/>
</dbReference>
<dbReference type="PDB" id="4V9D">
    <property type="method" value="X-ray"/>
    <property type="resolution" value="3.00 A"/>
    <property type="chains" value="CR/DR=1-103"/>
</dbReference>
<dbReference type="PDB" id="4V9O">
    <property type="method" value="X-ray"/>
    <property type="resolution" value="2.90 A"/>
    <property type="chains" value="AR/CR/ER/GR=1-103"/>
</dbReference>
<dbReference type="PDB" id="4V9P">
    <property type="method" value="X-ray"/>
    <property type="resolution" value="2.90 A"/>
    <property type="chains" value="AR/CR/ER/GR=1-103"/>
</dbReference>
<dbReference type="PDB" id="4WF1">
    <property type="method" value="X-ray"/>
    <property type="resolution" value="3.09 A"/>
    <property type="chains" value="BR/DR=1-103"/>
</dbReference>
<dbReference type="PDB" id="4WOI">
    <property type="method" value="X-ray"/>
    <property type="resolution" value="3.00 A"/>
    <property type="chains" value="BR/CR=1-103"/>
</dbReference>
<dbReference type="PDB" id="4WWW">
    <property type="method" value="X-ray"/>
    <property type="resolution" value="3.10 A"/>
    <property type="chains" value="RR/YR=1-103"/>
</dbReference>
<dbReference type="PDB" id="4YBB">
    <property type="method" value="X-ray"/>
    <property type="resolution" value="2.10 A"/>
    <property type="chains" value="CS/DS=1-103"/>
</dbReference>
<dbReference type="PDB" id="5ADY">
    <property type="method" value="EM"/>
    <property type="resolution" value="4.50 A"/>
    <property type="chains" value="R=1-103"/>
</dbReference>
<dbReference type="PDB" id="5AFI">
    <property type="method" value="EM"/>
    <property type="resolution" value="2.90 A"/>
    <property type="chains" value="R=1-103"/>
</dbReference>
<dbReference type="PDB" id="5AKA">
    <property type="method" value="EM"/>
    <property type="resolution" value="5.70 A"/>
    <property type="chains" value="R=1-103"/>
</dbReference>
<dbReference type="PDB" id="5GAD">
    <property type="method" value="EM"/>
    <property type="resolution" value="3.70 A"/>
    <property type="chains" value="S=1-103"/>
</dbReference>
<dbReference type="PDB" id="5GAE">
    <property type="method" value="EM"/>
    <property type="resolution" value="3.33 A"/>
    <property type="chains" value="S=1-103"/>
</dbReference>
<dbReference type="PDB" id="5GAF">
    <property type="method" value="EM"/>
    <property type="resolution" value="4.30 A"/>
    <property type="chains" value="S=1-103"/>
</dbReference>
<dbReference type="PDB" id="5GAG">
    <property type="method" value="EM"/>
    <property type="resolution" value="3.80 A"/>
    <property type="chains" value="S=1-103"/>
</dbReference>
<dbReference type="PDB" id="5GAH">
    <property type="method" value="EM"/>
    <property type="resolution" value="3.80 A"/>
    <property type="chains" value="S=1-103"/>
</dbReference>
<dbReference type="PDB" id="5H5U">
    <property type="method" value="EM"/>
    <property type="resolution" value="3.00 A"/>
    <property type="chains" value="S=1-103"/>
</dbReference>
<dbReference type="PDB" id="5IQR">
    <property type="method" value="EM"/>
    <property type="resolution" value="3.00 A"/>
    <property type="chains" value="R=1-103"/>
</dbReference>
<dbReference type="PDB" id="5IT8">
    <property type="method" value="X-ray"/>
    <property type="resolution" value="3.12 A"/>
    <property type="chains" value="CS/DS=1-103"/>
</dbReference>
<dbReference type="PDB" id="5J5B">
    <property type="method" value="X-ray"/>
    <property type="resolution" value="2.80 A"/>
    <property type="chains" value="CS/DS=1-103"/>
</dbReference>
<dbReference type="PDB" id="5J7L">
    <property type="method" value="X-ray"/>
    <property type="resolution" value="3.00 A"/>
    <property type="chains" value="CS/DS=1-103"/>
</dbReference>
<dbReference type="PDB" id="5J88">
    <property type="method" value="X-ray"/>
    <property type="resolution" value="3.32 A"/>
    <property type="chains" value="CS/DS=1-103"/>
</dbReference>
<dbReference type="PDB" id="5J8A">
    <property type="method" value="X-ray"/>
    <property type="resolution" value="3.10 A"/>
    <property type="chains" value="CS/DS=1-103"/>
</dbReference>
<dbReference type="PDB" id="5J91">
    <property type="method" value="X-ray"/>
    <property type="resolution" value="2.96 A"/>
    <property type="chains" value="CS/DS=1-103"/>
</dbReference>
<dbReference type="PDB" id="5JC9">
    <property type="method" value="X-ray"/>
    <property type="resolution" value="3.03 A"/>
    <property type="chains" value="CS/DS=1-103"/>
</dbReference>
<dbReference type="PDB" id="5JTE">
    <property type="method" value="EM"/>
    <property type="resolution" value="3.60 A"/>
    <property type="chains" value="BR=1-103"/>
</dbReference>
<dbReference type="PDB" id="5JU8">
    <property type="method" value="EM"/>
    <property type="resolution" value="3.60 A"/>
    <property type="chains" value="BR=1-103"/>
</dbReference>
<dbReference type="PDB" id="5KCR">
    <property type="method" value="EM"/>
    <property type="resolution" value="3.60 A"/>
    <property type="chains" value="1V=1-103"/>
</dbReference>
<dbReference type="PDB" id="5KCS">
    <property type="method" value="EM"/>
    <property type="resolution" value="3.90 A"/>
    <property type="chains" value="1V=1-103"/>
</dbReference>
<dbReference type="PDB" id="5KPS">
    <property type="method" value="EM"/>
    <property type="resolution" value="3.90 A"/>
    <property type="chains" value="R=1-103"/>
</dbReference>
<dbReference type="PDB" id="5KPV">
    <property type="method" value="EM"/>
    <property type="resolution" value="4.10 A"/>
    <property type="chains" value="Q=1-103"/>
</dbReference>
<dbReference type="PDB" id="5KPW">
    <property type="method" value="EM"/>
    <property type="resolution" value="3.90 A"/>
    <property type="chains" value="Q=1-103"/>
</dbReference>
<dbReference type="PDB" id="5KPX">
    <property type="method" value="EM"/>
    <property type="resolution" value="3.90 A"/>
    <property type="chains" value="Q=1-103"/>
</dbReference>
<dbReference type="PDB" id="5L3P">
    <property type="method" value="EM"/>
    <property type="resolution" value="3.70 A"/>
    <property type="chains" value="V=1-103"/>
</dbReference>
<dbReference type="PDB" id="5LZA">
    <property type="method" value="EM"/>
    <property type="resolution" value="3.60 A"/>
    <property type="chains" value="R=1-103"/>
</dbReference>
<dbReference type="PDB" id="5LZB">
    <property type="method" value="EM"/>
    <property type="resolution" value="5.30 A"/>
    <property type="chains" value="R=1-103"/>
</dbReference>
<dbReference type="PDB" id="5LZC">
    <property type="method" value="EM"/>
    <property type="resolution" value="4.80 A"/>
    <property type="chains" value="R=1-103"/>
</dbReference>
<dbReference type="PDB" id="5LZD">
    <property type="method" value="EM"/>
    <property type="resolution" value="3.40 A"/>
    <property type="chains" value="R=1-103"/>
</dbReference>
<dbReference type="PDB" id="5LZE">
    <property type="method" value="EM"/>
    <property type="resolution" value="3.50 A"/>
    <property type="chains" value="R=1-103"/>
</dbReference>
<dbReference type="PDB" id="5LZF">
    <property type="method" value="EM"/>
    <property type="resolution" value="4.60 A"/>
    <property type="chains" value="R=1-103"/>
</dbReference>
<dbReference type="PDB" id="5MDV">
    <property type="method" value="EM"/>
    <property type="resolution" value="2.97 A"/>
    <property type="chains" value="R=1-103"/>
</dbReference>
<dbReference type="PDB" id="5MDW">
    <property type="method" value="EM"/>
    <property type="resolution" value="3.06 A"/>
    <property type="chains" value="R=1-103"/>
</dbReference>
<dbReference type="PDB" id="5MDY">
    <property type="method" value="EM"/>
    <property type="resolution" value="3.35 A"/>
    <property type="chains" value="R=1-103"/>
</dbReference>
<dbReference type="PDB" id="5MDZ">
    <property type="method" value="EM"/>
    <property type="resolution" value="3.10 A"/>
    <property type="chains" value="R=1-103"/>
</dbReference>
<dbReference type="PDB" id="5MGP">
    <property type="method" value="EM"/>
    <property type="resolution" value="3.10 A"/>
    <property type="chains" value="R=1-103"/>
</dbReference>
<dbReference type="PDB" id="5NCO">
    <property type="method" value="EM"/>
    <property type="resolution" value="4.80 A"/>
    <property type="chains" value="S=1-103"/>
</dbReference>
<dbReference type="PDB" id="5NP6">
    <property type="method" value="EM"/>
    <property type="resolution" value="3.60 A"/>
    <property type="chains" value="p=1-103"/>
</dbReference>
<dbReference type="PDB" id="5NWY">
    <property type="method" value="EM"/>
    <property type="resolution" value="2.93 A"/>
    <property type="chains" value="e=1-103"/>
</dbReference>
<dbReference type="PDB" id="5O2R">
    <property type="method" value="EM"/>
    <property type="resolution" value="3.40 A"/>
    <property type="chains" value="R=1-103"/>
</dbReference>
<dbReference type="PDB" id="5U4I">
    <property type="method" value="EM"/>
    <property type="resolution" value="3.50 A"/>
    <property type="chains" value="S=1-103"/>
</dbReference>
<dbReference type="PDB" id="5U9F">
    <property type="method" value="EM"/>
    <property type="resolution" value="3.20 A"/>
    <property type="chains" value="20=1-103"/>
</dbReference>
<dbReference type="PDB" id="5U9G">
    <property type="method" value="EM"/>
    <property type="resolution" value="3.20 A"/>
    <property type="chains" value="20=1-103"/>
</dbReference>
<dbReference type="PDB" id="5UYK">
    <property type="method" value="EM"/>
    <property type="resolution" value="3.90 A"/>
    <property type="chains" value="20=1-103"/>
</dbReference>
<dbReference type="PDB" id="5UYL">
    <property type="method" value="EM"/>
    <property type="resolution" value="3.60 A"/>
    <property type="chains" value="20=1-103"/>
</dbReference>
<dbReference type="PDB" id="5UYM">
    <property type="method" value="EM"/>
    <property type="resolution" value="3.20 A"/>
    <property type="chains" value="20=1-103"/>
</dbReference>
<dbReference type="PDB" id="5UYN">
    <property type="method" value="EM"/>
    <property type="resolution" value="4.00 A"/>
    <property type="chains" value="20=1-103"/>
</dbReference>
<dbReference type="PDB" id="5UYP">
    <property type="method" value="EM"/>
    <property type="resolution" value="3.90 A"/>
    <property type="chains" value="20=1-103"/>
</dbReference>
<dbReference type="PDB" id="5UYQ">
    <property type="method" value="EM"/>
    <property type="resolution" value="3.80 A"/>
    <property type="chains" value="20=1-103"/>
</dbReference>
<dbReference type="PDB" id="5WDT">
    <property type="method" value="EM"/>
    <property type="resolution" value="3.00 A"/>
    <property type="chains" value="R=1-102"/>
</dbReference>
<dbReference type="PDB" id="5WE4">
    <property type="method" value="EM"/>
    <property type="resolution" value="3.10 A"/>
    <property type="chains" value="R=1-102"/>
</dbReference>
<dbReference type="PDB" id="5WE6">
    <property type="method" value="EM"/>
    <property type="resolution" value="3.40 A"/>
    <property type="chains" value="R=1-102"/>
</dbReference>
<dbReference type="PDB" id="5WF0">
    <property type="method" value="EM"/>
    <property type="resolution" value="3.60 A"/>
    <property type="chains" value="R=1-102"/>
</dbReference>
<dbReference type="PDB" id="5WFK">
    <property type="method" value="EM"/>
    <property type="resolution" value="3.40 A"/>
    <property type="chains" value="R=1-102"/>
</dbReference>
<dbReference type="PDB" id="5WFS">
    <property type="method" value="EM"/>
    <property type="resolution" value="3.00 A"/>
    <property type="chains" value="R=1-102"/>
</dbReference>
<dbReference type="PDB" id="6BU8">
    <property type="method" value="EM"/>
    <property type="resolution" value="3.50 A"/>
    <property type="chains" value="20=1-103"/>
</dbReference>
<dbReference type="PDB" id="6BY1">
    <property type="method" value="X-ray"/>
    <property type="resolution" value="3.94 A"/>
    <property type="chains" value="CR/DR=1-103"/>
</dbReference>
<dbReference type="PDB" id="6C4I">
    <property type="method" value="EM"/>
    <property type="resolution" value="3.24 A"/>
    <property type="chains" value="S=1-103"/>
</dbReference>
<dbReference type="PDB" id="6DNC">
    <property type="method" value="EM"/>
    <property type="resolution" value="3.70 A"/>
    <property type="chains" value="V=1-103"/>
</dbReference>
<dbReference type="PDB" id="6ENF">
    <property type="method" value="EM"/>
    <property type="resolution" value="3.20 A"/>
    <property type="chains" value="R=1-103"/>
</dbReference>
<dbReference type="PDB" id="6ENJ">
    <property type="method" value="EM"/>
    <property type="resolution" value="3.70 A"/>
    <property type="chains" value="R=1-103"/>
</dbReference>
<dbReference type="PDB" id="6ENU">
    <property type="method" value="EM"/>
    <property type="resolution" value="3.10 A"/>
    <property type="chains" value="R=1-103"/>
</dbReference>
<dbReference type="PDB" id="6GBZ">
    <property type="method" value="EM"/>
    <property type="resolution" value="3.80 A"/>
    <property type="chains" value="R=1-103"/>
</dbReference>
<dbReference type="PDB" id="6GC0">
    <property type="method" value="EM"/>
    <property type="resolution" value="3.80 A"/>
    <property type="chains" value="R=1-103"/>
</dbReference>
<dbReference type="PDB" id="6GC4">
    <property type="method" value="EM"/>
    <property type="resolution" value="4.30 A"/>
    <property type="chains" value="R=1-103"/>
</dbReference>
<dbReference type="PDB" id="6GC6">
    <property type="method" value="EM"/>
    <property type="resolution" value="4.30 A"/>
    <property type="chains" value="R=1-103"/>
</dbReference>
<dbReference type="PDB" id="6GC7">
    <property type="method" value="EM"/>
    <property type="resolution" value="4.30 A"/>
    <property type="chains" value="R=1-103"/>
</dbReference>
<dbReference type="PDB" id="6GC8">
    <property type="method" value="EM"/>
    <property type="resolution" value="3.80 A"/>
    <property type="chains" value="R=1-103"/>
</dbReference>
<dbReference type="PDB" id="6GWT">
    <property type="method" value="EM"/>
    <property type="resolution" value="3.80 A"/>
    <property type="chains" value="R=1-103"/>
</dbReference>
<dbReference type="PDB" id="6GXM">
    <property type="method" value="EM"/>
    <property type="resolution" value="3.80 A"/>
    <property type="chains" value="R=1-103"/>
</dbReference>
<dbReference type="PDB" id="6GXN">
    <property type="method" value="EM"/>
    <property type="resolution" value="3.90 A"/>
    <property type="chains" value="R=1-103"/>
</dbReference>
<dbReference type="PDB" id="6GXO">
    <property type="method" value="EM"/>
    <property type="resolution" value="3.90 A"/>
    <property type="chains" value="R=1-103"/>
</dbReference>
<dbReference type="PDB" id="6GXP">
    <property type="method" value="EM"/>
    <property type="resolution" value="4.40 A"/>
    <property type="chains" value="R=1-103"/>
</dbReference>
<dbReference type="PDB" id="6H4N">
    <property type="method" value="EM"/>
    <property type="resolution" value="3.00 A"/>
    <property type="chains" value="R=1-103"/>
</dbReference>
<dbReference type="PDB" id="6H58">
    <property type="method" value="EM"/>
    <property type="resolution" value="7.90 A"/>
    <property type="chains" value="R/RR=1-103"/>
</dbReference>
<dbReference type="PDB" id="6HRM">
    <property type="method" value="EM"/>
    <property type="resolution" value="2.96 A"/>
    <property type="chains" value="R=1-103"/>
</dbReference>
<dbReference type="PDB" id="6I0Y">
    <property type="method" value="EM"/>
    <property type="resolution" value="3.20 A"/>
    <property type="chains" value="R=1-103"/>
</dbReference>
<dbReference type="PDB" id="6I7V">
    <property type="method" value="X-ray"/>
    <property type="resolution" value="2.90 A"/>
    <property type="chains" value="CS/DS=1-103"/>
</dbReference>
<dbReference type="PDB" id="6O9J">
    <property type="method" value="EM"/>
    <property type="resolution" value="3.90 A"/>
    <property type="chains" value="R=1-103"/>
</dbReference>
<dbReference type="PDB" id="6O9K">
    <property type="method" value="EM"/>
    <property type="resolution" value="4.00 A"/>
    <property type="chains" value="R=1-103"/>
</dbReference>
<dbReference type="PDB" id="6OFX">
    <property type="method" value="EM"/>
    <property type="resolution" value="3.30 A"/>
    <property type="chains" value="r=1-103"/>
</dbReference>
<dbReference type="PDB" id="6OG7">
    <property type="method" value="EM"/>
    <property type="resolution" value="3.30 A"/>
    <property type="chains" value="r=1-103"/>
</dbReference>
<dbReference type="PDB" id="6OGF">
    <property type="method" value="EM"/>
    <property type="resolution" value="3.90 A"/>
    <property type="chains" value="r=1-103"/>
</dbReference>
<dbReference type="PDB" id="6OGG">
    <property type="method" value="EM"/>
    <property type="resolution" value="4.20 A"/>
    <property type="chains" value="r=1-103"/>
</dbReference>
<dbReference type="PDB" id="6OGI">
    <property type="method" value="EM"/>
    <property type="resolution" value="3.40 A"/>
    <property type="chains" value="r=1-103"/>
</dbReference>
<dbReference type="PDB" id="6OM6">
    <property type="method" value="EM"/>
    <property type="resolution" value="3.10 A"/>
    <property type="chains" value="R=1-103"/>
</dbReference>
<dbReference type="PDB" id="6ORE">
    <property type="method" value="EM"/>
    <property type="resolution" value="2.90 A"/>
    <property type="chains" value="R=1-103"/>
</dbReference>
<dbReference type="PDB" id="6ORL">
    <property type="method" value="EM"/>
    <property type="resolution" value="3.50 A"/>
    <property type="chains" value="R=1-103"/>
</dbReference>
<dbReference type="PDB" id="6OSK">
    <property type="method" value="EM"/>
    <property type="resolution" value="3.60 A"/>
    <property type="chains" value="R=1-103"/>
</dbReference>
<dbReference type="PDB" id="6OSQ">
    <property type="method" value="EM"/>
    <property type="resolution" value="3.50 A"/>
    <property type="chains" value="R=1-103"/>
</dbReference>
<dbReference type="PDB" id="6OST">
    <property type="method" value="EM"/>
    <property type="resolution" value="4.20 A"/>
    <property type="chains" value="R=1-103"/>
</dbReference>
<dbReference type="PDB" id="6OT3">
    <property type="method" value="EM"/>
    <property type="resolution" value="3.90 A"/>
    <property type="chains" value="R=1-103"/>
</dbReference>
<dbReference type="PDB" id="6OUO">
    <property type="method" value="EM"/>
    <property type="resolution" value="3.70 A"/>
    <property type="chains" value="R=1-103"/>
</dbReference>
<dbReference type="PDB" id="6PJ6">
    <property type="method" value="EM"/>
    <property type="resolution" value="2.20 A"/>
    <property type="chains" value="Z=1-103"/>
</dbReference>
<dbReference type="PDB" id="6Q97">
    <property type="method" value="EM"/>
    <property type="resolution" value="3.90 A"/>
    <property type="chains" value="R=1-103"/>
</dbReference>
<dbReference type="PDB" id="6Q98">
    <property type="method" value="EM"/>
    <property type="resolution" value="4.30 A"/>
    <property type="chains" value="R=1-103"/>
</dbReference>
<dbReference type="PDB" id="6Q9A">
    <property type="method" value="EM"/>
    <property type="resolution" value="3.70 A"/>
    <property type="chains" value="R=1-102"/>
</dbReference>
<dbReference type="PDB" id="6QDW">
    <property type="method" value="EM"/>
    <property type="resolution" value="2.83 A"/>
    <property type="chains" value="r=1-103"/>
</dbReference>
<dbReference type="PDB" id="6QUL">
    <property type="method" value="EM"/>
    <property type="resolution" value="3.00 A"/>
    <property type="chains" value="S=1-103"/>
</dbReference>
<dbReference type="PDB" id="6S0K">
    <property type="method" value="EM"/>
    <property type="resolution" value="3.10 A"/>
    <property type="chains" value="S=1-103"/>
</dbReference>
<dbReference type="PDB" id="6SZS">
    <property type="method" value="EM"/>
    <property type="resolution" value="3.06 A"/>
    <property type="chains" value="R=1-103"/>
</dbReference>
<dbReference type="PDB" id="6TBV">
    <property type="method" value="EM"/>
    <property type="resolution" value="2.70 A"/>
    <property type="chains" value="L211=1-103"/>
</dbReference>
<dbReference type="PDB" id="6TC3">
    <property type="method" value="EM"/>
    <property type="resolution" value="2.70 A"/>
    <property type="chains" value="L211=1-103"/>
</dbReference>
<dbReference type="PDB" id="6U48">
    <property type="method" value="EM"/>
    <property type="resolution" value="2.87 A"/>
    <property type="chains" value="CS=1-103"/>
</dbReference>
<dbReference type="PDB" id="6VU3">
    <property type="method" value="EM"/>
    <property type="resolution" value="3.70 A"/>
    <property type="chains" value="0=1-103"/>
</dbReference>
<dbReference type="PDB" id="6VWL">
    <property type="method" value="EM"/>
    <property type="resolution" value="3.10 A"/>
    <property type="chains" value="P=1-103"/>
</dbReference>
<dbReference type="PDB" id="6VWM">
    <property type="method" value="EM"/>
    <property type="resolution" value="3.40 A"/>
    <property type="chains" value="P=1-103"/>
</dbReference>
<dbReference type="PDB" id="6VWN">
    <property type="method" value="EM"/>
    <property type="resolution" value="3.40 A"/>
    <property type="chains" value="P=1-103"/>
</dbReference>
<dbReference type="PDB" id="6VYQ">
    <property type="method" value="EM"/>
    <property type="resolution" value="3.70 A"/>
    <property type="chains" value="0=1-103"/>
</dbReference>
<dbReference type="PDB" id="6VYR">
    <property type="method" value="EM"/>
    <property type="resolution" value="3.80 A"/>
    <property type="chains" value="0=1-103"/>
</dbReference>
<dbReference type="PDB" id="6VYS">
    <property type="method" value="EM"/>
    <property type="resolution" value="3.70 A"/>
    <property type="chains" value="0=1-103"/>
</dbReference>
<dbReference type="PDB" id="6VYT">
    <property type="method" value="EM"/>
    <property type="resolution" value="14.00 A"/>
    <property type="chains" value="0=1-103"/>
</dbReference>
<dbReference type="PDB" id="6VYU">
    <property type="method" value="EM"/>
    <property type="resolution" value="7.00 A"/>
    <property type="chains" value="0=1-103"/>
</dbReference>
<dbReference type="PDB" id="6VYW">
    <property type="method" value="EM"/>
    <property type="resolution" value="7.00 A"/>
    <property type="chains" value="0=1-103"/>
</dbReference>
<dbReference type="PDB" id="6VYX">
    <property type="method" value="EM"/>
    <property type="resolution" value="9.90 A"/>
    <property type="chains" value="0=1-103"/>
</dbReference>
<dbReference type="PDB" id="6VYY">
    <property type="method" value="EM"/>
    <property type="resolution" value="9.90 A"/>
    <property type="chains" value="0=1-103"/>
</dbReference>
<dbReference type="PDB" id="6VYZ">
    <property type="method" value="EM"/>
    <property type="resolution" value="9.90 A"/>
    <property type="chains" value="0=1-103"/>
</dbReference>
<dbReference type="PDB" id="6VZ2">
    <property type="method" value="EM"/>
    <property type="resolution" value="10.00 A"/>
    <property type="chains" value="0=1-103"/>
</dbReference>
<dbReference type="PDB" id="6VZ3">
    <property type="method" value="EM"/>
    <property type="resolution" value="8.90 A"/>
    <property type="chains" value="0=1-103"/>
</dbReference>
<dbReference type="PDB" id="6VZ5">
    <property type="method" value="EM"/>
    <property type="resolution" value="8.90 A"/>
    <property type="chains" value="0=1-103"/>
</dbReference>
<dbReference type="PDB" id="6VZ7">
    <property type="method" value="EM"/>
    <property type="resolution" value="7.00 A"/>
    <property type="chains" value="0=1-103"/>
</dbReference>
<dbReference type="PDB" id="6VZJ">
    <property type="method" value="EM"/>
    <property type="resolution" value="4.10 A"/>
    <property type="chains" value="0=1-103"/>
</dbReference>
<dbReference type="PDB" id="6WD0">
    <property type="method" value="EM"/>
    <property type="resolution" value="3.00 A"/>
    <property type="chains" value="r=1-103"/>
</dbReference>
<dbReference type="PDB" id="6WD1">
    <property type="method" value="EM"/>
    <property type="resolution" value="3.30 A"/>
    <property type="chains" value="r=1-103"/>
</dbReference>
<dbReference type="PDB" id="6WD2">
    <property type="method" value="EM"/>
    <property type="resolution" value="3.60 A"/>
    <property type="chains" value="r=1-103"/>
</dbReference>
<dbReference type="PDB" id="6WD3">
    <property type="method" value="EM"/>
    <property type="resolution" value="3.60 A"/>
    <property type="chains" value="r=1-103"/>
</dbReference>
<dbReference type="PDB" id="6WD4">
    <property type="method" value="EM"/>
    <property type="resolution" value="3.70 A"/>
    <property type="chains" value="r=1-103"/>
</dbReference>
<dbReference type="PDB" id="6WD5">
    <property type="method" value="EM"/>
    <property type="resolution" value="3.60 A"/>
    <property type="chains" value="r=1-103"/>
</dbReference>
<dbReference type="PDB" id="6WD6">
    <property type="method" value="EM"/>
    <property type="resolution" value="3.70 A"/>
    <property type="chains" value="r=1-103"/>
</dbReference>
<dbReference type="PDB" id="6WD7">
    <property type="method" value="EM"/>
    <property type="resolution" value="3.90 A"/>
    <property type="chains" value="r=1-103"/>
</dbReference>
<dbReference type="PDB" id="6WD8">
    <property type="method" value="EM"/>
    <property type="resolution" value="3.70 A"/>
    <property type="chains" value="r=1-103"/>
</dbReference>
<dbReference type="PDB" id="6WD9">
    <property type="method" value="EM"/>
    <property type="resolution" value="3.70 A"/>
    <property type="chains" value="r=1-103"/>
</dbReference>
<dbReference type="PDB" id="6WDA">
    <property type="method" value="EM"/>
    <property type="resolution" value="3.80 A"/>
    <property type="chains" value="r=1-103"/>
</dbReference>
<dbReference type="PDB" id="6WDB">
    <property type="method" value="EM"/>
    <property type="resolution" value="4.00 A"/>
    <property type="chains" value="r=1-103"/>
</dbReference>
<dbReference type="PDB" id="6WDC">
    <property type="method" value="EM"/>
    <property type="resolution" value="4.20 A"/>
    <property type="chains" value="r=1-103"/>
</dbReference>
<dbReference type="PDB" id="6WDD">
    <property type="method" value="EM"/>
    <property type="resolution" value="3.20 A"/>
    <property type="chains" value="r=1-103"/>
</dbReference>
<dbReference type="PDB" id="6WDE">
    <property type="method" value="EM"/>
    <property type="resolution" value="3.00 A"/>
    <property type="chains" value="r=1-103"/>
</dbReference>
<dbReference type="PDB" id="6WDF">
    <property type="method" value="EM"/>
    <property type="resolution" value="3.30 A"/>
    <property type="chains" value="r=1-103"/>
</dbReference>
<dbReference type="PDB" id="6WDG">
    <property type="method" value="EM"/>
    <property type="resolution" value="3.30 A"/>
    <property type="chains" value="r=1-103"/>
</dbReference>
<dbReference type="PDB" id="6WDH">
    <property type="method" value="EM"/>
    <property type="resolution" value="4.30 A"/>
    <property type="chains" value="r=1-103"/>
</dbReference>
<dbReference type="PDB" id="6WDI">
    <property type="method" value="EM"/>
    <property type="resolution" value="4.00 A"/>
    <property type="chains" value="r=1-103"/>
</dbReference>
<dbReference type="PDB" id="6WDJ">
    <property type="method" value="EM"/>
    <property type="resolution" value="3.70 A"/>
    <property type="chains" value="r=1-103"/>
</dbReference>
<dbReference type="PDB" id="6WDK">
    <property type="method" value="EM"/>
    <property type="resolution" value="3.60 A"/>
    <property type="chains" value="r=1-103"/>
</dbReference>
<dbReference type="PDB" id="6WDL">
    <property type="method" value="EM"/>
    <property type="resolution" value="3.70 A"/>
    <property type="chains" value="r=1-103"/>
</dbReference>
<dbReference type="PDB" id="6WDM">
    <property type="method" value="EM"/>
    <property type="resolution" value="3.60 A"/>
    <property type="chains" value="r=1-103"/>
</dbReference>
<dbReference type="PDB" id="6WNT">
    <property type="method" value="EM"/>
    <property type="resolution" value="3.10 A"/>
    <property type="chains" value="r=1-103"/>
</dbReference>
<dbReference type="PDB" id="6WNV">
    <property type="method" value="EM"/>
    <property type="resolution" value="3.50 A"/>
    <property type="chains" value="r=1-103"/>
</dbReference>
<dbReference type="PDB" id="6WNW">
    <property type="method" value="EM"/>
    <property type="resolution" value="3.20 A"/>
    <property type="chains" value="r=1-103"/>
</dbReference>
<dbReference type="PDB" id="6X6T">
    <property type="method" value="EM"/>
    <property type="resolution" value="3.20 A"/>
    <property type="chains" value="0=1-103"/>
</dbReference>
<dbReference type="PDB" id="6X7F">
    <property type="method" value="EM"/>
    <property type="resolution" value="3.50 A"/>
    <property type="chains" value="0=1-103"/>
</dbReference>
<dbReference type="PDB" id="6X7K">
    <property type="method" value="EM"/>
    <property type="resolution" value="3.10 A"/>
    <property type="chains" value="0=1-103"/>
</dbReference>
<dbReference type="PDB" id="6X9Q">
    <property type="method" value="EM"/>
    <property type="resolution" value="4.80 A"/>
    <property type="chains" value="0=1-103"/>
</dbReference>
<dbReference type="PDB" id="6XDQ">
    <property type="method" value="EM"/>
    <property type="resolution" value="3.70 A"/>
    <property type="chains" value="0=1-103"/>
</dbReference>
<dbReference type="PDB" id="6XDR">
    <property type="method" value="EM"/>
    <property type="resolution" value="4.70 A"/>
    <property type="chains" value="0=1-103"/>
</dbReference>
<dbReference type="PDB" id="6XGF">
    <property type="method" value="EM"/>
    <property type="resolution" value="5.00 A"/>
    <property type="chains" value="0=1-103"/>
</dbReference>
<dbReference type="PDB" id="6XII">
    <property type="method" value="EM"/>
    <property type="resolution" value="7.00 A"/>
    <property type="chains" value="0=1-103"/>
</dbReference>
<dbReference type="PDB" id="6XIJ">
    <property type="method" value="EM"/>
    <property type="resolution" value="8.00 A"/>
    <property type="chains" value="0=1-103"/>
</dbReference>
<dbReference type="PDB" id="6XZ7">
    <property type="method" value="EM"/>
    <property type="resolution" value="2.10 A"/>
    <property type="chains" value="R=1-103"/>
</dbReference>
<dbReference type="PDB" id="6XZA">
    <property type="method" value="EM"/>
    <property type="resolution" value="2.66 A"/>
    <property type="chains" value="R2=1-103"/>
</dbReference>
<dbReference type="PDB" id="6XZB">
    <property type="method" value="EM"/>
    <property type="resolution" value="2.54 A"/>
    <property type="chains" value="R2=1-103"/>
</dbReference>
<dbReference type="PDB" id="6Y69">
    <property type="method" value="EM"/>
    <property type="resolution" value="2.86 A"/>
    <property type="chains" value="R=1-103"/>
</dbReference>
<dbReference type="PDB" id="6YS3">
    <property type="method" value="EM"/>
    <property type="resolution" value="2.58 A"/>
    <property type="chains" value="r=1-103"/>
</dbReference>
<dbReference type="PDB" id="6YSR">
    <property type="method" value="EM"/>
    <property type="resolution" value="3.10 A"/>
    <property type="chains" value="R=1-103"/>
</dbReference>
<dbReference type="PDB" id="6YSS">
    <property type="method" value="EM"/>
    <property type="resolution" value="2.60 A"/>
    <property type="chains" value="R=1-103"/>
</dbReference>
<dbReference type="PDB" id="6YST">
    <property type="method" value="EM"/>
    <property type="resolution" value="3.20 A"/>
    <property type="chains" value="R=1-103"/>
</dbReference>
<dbReference type="PDB" id="6YSU">
    <property type="method" value="EM"/>
    <property type="resolution" value="3.70 A"/>
    <property type="chains" value="R=1-103"/>
</dbReference>
<dbReference type="PDB" id="6ZTJ">
    <property type="method" value="EM"/>
    <property type="resolution" value="3.40 A"/>
    <property type="chains" value="BS=1-103"/>
</dbReference>
<dbReference type="PDB" id="6ZTL">
    <property type="method" value="EM"/>
    <property type="resolution" value="3.50 A"/>
    <property type="chains" value="BS=1-103"/>
</dbReference>
<dbReference type="PDB" id="6ZTM">
    <property type="method" value="EM"/>
    <property type="resolution" value="3.30 A"/>
    <property type="chains" value="BS=1-103"/>
</dbReference>
<dbReference type="PDB" id="6ZTN">
    <property type="method" value="EM"/>
    <property type="resolution" value="3.90 A"/>
    <property type="chains" value="BS=1-103"/>
</dbReference>
<dbReference type="PDB" id="6ZTO">
    <property type="method" value="EM"/>
    <property type="resolution" value="3.00 A"/>
    <property type="chains" value="BS=1-103"/>
</dbReference>
<dbReference type="PDB" id="6ZTP">
    <property type="method" value="EM"/>
    <property type="resolution" value="3.00 A"/>
    <property type="chains" value="BS=1-103"/>
</dbReference>
<dbReference type="PDB" id="6ZU1">
    <property type="method" value="EM"/>
    <property type="resolution" value="3.00 A"/>
    <property type="chains" value="BS=1-103"/>
</dbReference>
<dbReference type="PDB" id="7ABZ">
    <property type="method" value="EM"/>
    <property type="resolution" value="3.21 A"/>
    <property type="chains" value="R=1-103"/>
</dbReference>
<dbReference type="PDB" id="7AC7">
    <property type="method" value="EM"/>
    <property type="resolution" value="3.08 A"/>
    <property type="chains" value="R=1-103"/>
</dbReference>
<dbReference type="PDB" id="7ACJ">
    <property type="method" value="EM"/>
    <property type="resolution" value="3.20 A"/>
    <property type="chains" value="R=1-103"/>
</dbReference>
<dbReference type="PDB" id="7ACR">
    <property type="method" value="EM"/>
    <property type="resolution" value="3.44 A"/>
    <property type="chains" value="R=1-103"/>
</dbReference>
<dbReference type="PDB" id="7B5K">
    <property type="method" value="EM"/>
    <property type="resolution" value="2.90 A"/>
    <property type="chains" value="R=1-103"/>
</dbReference>
<dbReference type="PDB" id="7BL2">
    <property type="method" value="EM"/>
    <property type="resolution" value="3.70 A"/>
    <property type="chains" value="R=1-103"/>
</dbReference>
<dbReference type="PDB" id="7BL3">
    <property type="method" value="EM"/>
    <property type="resolution" value="3.50 A"/>
    <property type="chains" value="R=1-103"/>
</dbReference>
<dbReference type="PDB" id="7BL4">
    <property type="method" value="EM"/>
    <property type="resolution" value="2.40 A"/>
    <property type="chains" value="R=1-103"/>
</dbReference>
<dbReference type="PDB" id="7BL5">
    <property type="method" value="EM"/>
    <property type="resolution" value="3.30 A"/>
    <property type="chains" value="R=1-103"/>
</dbReference>
<dbReference type="PDB" id="7BL6">
    <property type="method" value="EM"/>
    <property type="resolution" value="4.00 A"/>
    <property type="chains" value="R=1-103"/>
</dbReference>
<dbReference type="PDB" id="7BV8">
    <property type="method" value="EM"/>
    <property type="resolution" value="3.14 A"/>
    <property type="chains" value="S=1-103"/>
</dbReference>
<dbReference type="PDB" id="7D6Z">
    <property type="method" value="EM"/>
    <property type="resolution" value="3.40 A"/>
    <property type="chains" value="R=1-103"/>
</dbReference>
<dbReference type="PDB" id="7D80">
    <property type="method" value="EM"/>
    <property type="resolution" value="4.10 A"/>
    <property type="chains" value="q=1-103"/>
</dbReference>
<dbReference type="PDB" id="7JSS">
    <property type="method" value="EM"/>
    <property type="resolution" value="3.70 A"/>
    <property type="chains" value="r=1-103"/>
</dbReference>
<dbReference type="PDB" id="7JSW">
    <property type="method" value="EM"/>
    <property type="resolution" value="3.80 A"/>
    <property type="chains" value="r=1-103"/>
</dbReference>
<dbReference type="PDB" id="7JSZ">
    <property type="method" value="EM"/>
    <property type="resolution" value="3.70 A"/>
    <property type="chains" value="r=1-103"/>
</dbReference>
<dbReference type="PDB" id="7JT1">
    <property type="method" value="EM"/>
    <property type="resolution" value="3.30 A"/>
    <property type="chains" value="r=1-103"/>
</dbReference>
<dbReference type="PDB" id="7JT2">
    <property type="method" value="EM"/>
    <property type="resolution" value="3.50 A"/>
    <property type="chains" value="r=1-103"/>
</dbReference>
<dbReference type="PDB" id="7JT3">
    <property type="method" value="EM"/>
    <property type="resolution" value="3.70 A"/>
    <property type="chains" value="r=1-103"/>
</dbReference>
<dbReference type="PDB" id="7K00">
    <property type="method" value="EM"/>
    <property type="resolution" value="1.98 A"/>
    <property type="chains" value="q=1-103"/>
</dbReference>
<dbReference type="PDB" id="7K50">
    <property type="method" value="EM"/>
    <property type="resolution" value="3.40 A"/>
    <property type="chains" value="r=1-103"/>
</dbReference>
<dbReference type="PDB" id="7K51">
    <property type="method" value="EM"/>
    <property type="resolution" value="3.50 A"/>
    <property type="chains" value="r=1-103"/>
</dbReference>
<dbReference type="PDB" id="7K52">
    <property type="method" value="EM"/>
    <property type="resolution" value="3.40 A"/>
    <property type="chains" value="r=1-103"/>
</dbReference>
<dbReference type="PDB" id="7K53">
    <property type="method" value="EM"/>
    <property type="resolution" value="3.20 A"/>
    <property type="chains" value="r=1-103"/>
</dbReference>
<dbReference type="PDB" id="7K54">
    <property type="method" value="EM"/>
    <property type="resolution" value="3.20 A"/>
    <property type="chains" value="r=1-103"/>
</dbReference>
<dbReference type="PDB" id="7K55">
    <property type="method" value="EM"/>
    <property type="resolution" value="3.30 A"/>
    <property type="chains" value="r=1-103"/>
</dbReference>
<dbReference type="PDB" id="7LV0">
    <property type="method" value="EM"/>
    <property type="resolution" value="3.20 A"/>
    <property type="chains" value="r=1-103"/>
</dbReference>
<dbReference type="PDB" id="7LVK">
    <property type="method" value="EM"/>
    <property type="resolution" value="2.20 A"/>
    <property type="chains" value="Z=1-103"/>
</dbReference>
<dbReference type="PDB" id="7M5D">
    <property type="method" value="EM"/>
    <property type="resolution" value="2.80 A"/>
    <property type="chains" value="R=1-103"/>
</dbReference>
<dbReference type="PDB" id="7N1P">
    <property type="method" value="EM"/>
    <property type="resolution" value="2.33 A"/>
    <property type="chains" value="LU=1-103"/>
</dbReference>
<dbReference type="PDB" id="7N2C">
    <property type="method" value="EM"/>
    <property type="resolution" value="2.72 A"/>
    <property type="chains" value="LU=1-103"/>
</dbReference>
<dbReference type="PDB" id="7N2U">
    <property type="method" value="EM"/>
    <property type="resolution" value="2.53 A"/>
    <property type="chains" value="LU=1-103"/>
</dbReference>
<dbReference type="PDB" id="7N2V">
    <property type="method" value="EM"/>
    <property type="resolution" value="2.54 A"/>
    <property type="chains" value="LU=1-103"/>
</dbReference>
<dbReference type="PDB" id="7N30">
    <property type="method" value="EM"/>
    <property type="resolution" value="2.66 A"/>
    <property type="chains" value="LU=1-103"/>
</dbReference>
<dbReference type="PDB" id="7N31">
    <property type="method" value="EM"/>
    <property type="resolution" value="2.69 A"/>
    <property type="chains" value="LU=1-103"/>
</dbReference>
<dbReference type="PDB" id="7NBU">
    <property type="method" value="EM"/>
    <property type="resolution" value="3.11 A"/>
    <property type="chains" value="q=1-103"/>
</dbReference>
<dbReference type="PDB" id="7NSO">
    <property type="method" value="EM"/>
    <property type="resolution" value="2.90 A"/>
    <property type="chains" value="R=1-103"/>
</dbReference>
<dbReference type="PDB" id="7NSP">
    <property type="method" value="EM"/>
    <property type="resolution" value="3.50 A"/>
    <property type="chains" value="R=1-103"/>
</dbReference>
<dbReference type="PDB" id="7NSQ">
    <property type="method" value="EM"/>
    <property type="resolution" value="3.10 A"/>
    <property type="chains" value="R=1-103"/>
</dbReference>
<dbReference type="PDB" id="7NWT">
    <property type="method" value="EM"/>
    <property type="resolution" value="2.66 A"/>
    <property type="chains" value="R=1-103"/>
</dbReference>
<dbReference type="PDB" id="7NWW">
    <property type="method" value="EM"/>
    <property type="resolution" value="3.05 A"/>
    <property type="chains" value="Q=1-103"/>
</dbReference>
<dbReference type="PDB" id="7O19">
    <property type="method" value="EM"/>
    <property type="resolution" value="2.90 A"/>
    <property type="chains" value="BR=1-103"/>
</dbReference>
<dbReference type="PDB" id="7O1A">
    <property type="method" value="EM"/>
    <property type="resolution" value="2.40 A"/>
    <property type="chains" value="BR=1-103"/>
</dbReference>
<dbReference type="PDB" id="7O1C">
    <property type="method" value="EM"/>
    <property type="resolution" value="2.60 A"/>
    <property type="chains" value="BR=1-103"/>
</dbReference>
<dbReference type="PDB" id="7ODE">
    <property type="method" value="EM"/>
    <property type="resolution" value="2.84 A"/>
    <property type="chains" value="Z=1-103"/>
</dbReference>
<dbReference type="PDB" id="7OIF">
    <property type="method" value="EM"/>
    <property type="resolution" value="3.00 A"/>
    <property type="chains" value="Q=1-103"/>
</dbReference>
<dbReference type="PDB" id="7OIG">
    <property type="method" value="EM"/>
    <property type="resolution" value="3.20 A"/>
    <property type="chains" value="Q=1-103"/>
</dbReference>
<dbReference type="PDB" id="7OII">
    <property type="method" value="EM"/>
    <property type="resolution" value="3.00 A"/>
    <property type="chains" value="Q=1-103"/>
</dbReference>
<dbReference type="PDB" id="7OIZ">
    <property type="method" value="EM"/>
    <property type="resolution" value="2.90 A"/>
    <property type="chains" value="q=1-103"/>
</dbReference>
<dbReference type="PDB" id="7OJ0">
    <property type="method" value="EM"/>
    <property type="resolution" value="3.50 A"/>
    <property type="chains" value="q=1-103"/>
</dbReference>
<dbReference type="PDB" id="7OT5">
    <property type="method" value="EM"/>
    <property type="resolution" value="2.90 A"/>
    <property type="chains" value="Q=1-103"/>
</dbReference>
<dbReference type="PDB" id="7P3K">
    <property type="method" value="EM"/>
    <property type="resolution" value="2.90 A"/>
    <property type="chains" value="q=1-103"/>
</dbReference>
<dbReference type="PDB" id="7PJS">
    <property type="method" value="EM"/>
    <property type="resolution" value="2.35 A"/>
    <property type="chains" value="R=1-103"/>
</dbReference>
<dbReference type="PDB" id="7PJT">
    <property type="method" value="EM"/>
    <property type="resolution" value="6.00 A"/>
    <property type="chains" value="R=1-103"/>
</dbReference>
<dbReference type="PDB" id="7PJU">
    <property type="method" value="EM"/>
    <property type="resolution" value="9.50 A"/>
    <property type="chains" value="R=1-103"/>
</dbReference>
<dbReference type="PDB" id="7PJV">
    <property type="method" value="EM"/>
    <property type="resolution" value="3.10 A"/>
    <property type="chains" value="R=1-103"/>
</dbReference>
<dbReference type="PDB" id="7PJW">
    <property type="method" value="EM"/>
    <property type="resolution" value="4.00 A"/>
    <property type="chains" value="R=1-103"/>
</dbReference>
<dbReference type="PDB" id="7PJX">
    <property type="method" value="EM"/>
    <property type="resolution" value="6.50 A"/>
    <property type="chains" value="R=1-103"/>
</dbReference>
<dbReference type="PDB" id="7PJY">
    <property type="method" value="EM"/>
    <property type="resolution" value="3.10 A"/>
    <property type="chains" value="R=1-103"/>
</dbReference>
<dbReference type="PDB" id="7PJZ">
    <property type="method" value="EM"/>
    <property type="resolution" value="6.00 A"/>
    <property type="chains" value="R=1-103"/>
</dbReference>
<dbReference type="PDB" id="7Q4K">
    <property type="method" value="EM"/>
    <property type="resolution" value="3.00 A"/>
    <property type="chains" value="BR=1-103"/>
</dbReference>
<dbReference type="PDB" id="7QG8">
    <property type="method" value="EM"/>
    <property type="resolution" value="3.97 A"/>
    <property type="chains" value="e=1-103"/>
</dbReference>
<dbReference type="PDB" id="7QGH">
    <property type="method" value="EM"/>
    <property type="resolution" value="4.48 A"/>
    <property type="chains" value="e=1-103"/>
</dbReference>
<dbReference type="PDB" id="7QGN">
    <property type="method" value="EM"/>
    <property type="resolution" value="3.37 A"/>
    <property type="chains" value="e=1-103"/>
</dbReference>
<dbReference type="PDB" id="7QGR">
    <property type="method" value="EM"/>
    <property type="resolution" value="5.70 A"/>
    <property type="chains" value="e=1-103"/>
</dbReference>
<dbReference type="PDB" id="7QQ3">
    <property type="method" value="EM"/>
    <property type="resolution" value="2.10 A"/>
    <property type="chains" value="Z=1-103"/>
</dbReference>
<dbReference type="PDB" id="7S1G">
    <property type="method" value="EM"/>
    <property type="resolution" value="2.48 A"/>
    <property type="chains" value="Z=1-103"/>
</dbReference>
<dbReference type="PDB" id="7S1H">
    <property type="method" value="EM"/>
    <property type="resolution" value="2.35 A"/>
    <property type="chains" value="Z=1-103"/>
</dbReference>
<dbReference type="PDB" id="7S1I">
    <property type="method" value="EM"/>
    <property type="resolution" value="2.48 A"/>
    <property type="chains" value="Z=1-103"/>
</dbReference>
<dbReference type="PDB" id="7S1J">
    <property type="method" value="EM"/>
    <property type="resolution" value="2.47 A"/>
    <property type="chains" value="Z=1-103"/>
</dbReference>
<dbReference type="PDB" id="7S1K">
    <property type="method" value="EM"/>
    <property type="resolution" value="2.42 A"/>
    <property type="chains" value="Z=1-103"/>
</dbReference>
<dbReference type="PDB" id="7SA4">
    <property type="method" value="EM"/>
    <property type="resolution" value="2.55 A"/>
    <property type="chains" value="R=1-103"/>
</dbReference>
<dbReference type="PDB" id="7SS9">
    <property type="method" value="EM"/>
    <property type="resolution" value="3.90 A"/>
    <property type="chains" value="r=1-103"/>
</dbReference>
<dbReference type="PDB" id="7SSD">
    <property type="method" value="EM"/>
    <property type="resolution" value="3.30 A"/>
    <property type="chains" value="r=1-103"/>
</dbReference>
<dbReference type="PDB" id="7SSL">
    <property type="method" value="EM"/>
    <property type="resolution" value="3.80 A"/>
    <property type="chains" value="r=1-103"/>
</dbReference>
<dbReference type="PDB" id="7SSN">
    <property type="method" value="EM"/>
    <property type="resolution" value="3.20 A"/>
    <property type="chains" value="r=1-103"/>
</dbReference>
<dbReference type="PDB" id="7SSO">
    <property type="method" value="EM"/>
    <property type="resolution" value="3.20 A"/>
    <property type="chains" value="r=1-103"/>
</dbReference>
<dbReference type="PDB" id="7SSW">
    <property type="method" value="EM"/>
    <property type="resolution" value="3.80 A"/>
    <property type="chains" value="r=1-103"/>
</dbReference>
<dbReference type="PDB" id="7ST2">
    <property type="method" value="EM"/>
    <property type="resolution" value="2.90 A"/>
    <property type="chains" value="r=1-103"/>
</dbReference>
<dbReference type="PDB" id="7ST6">
    <property type="method" value="EM"/>
    <property type="resolution" value="3.00 A"/>
    <property type="chains" value="r=1-103"/>
</dbReference>
<dbReference type="PDB" id="7ST7">
    <property type="method" value="EM"/>
    <property type="resolution" value="3.20 A"/>
    <property type="chains" value="r=1-103"/>
</dbReference>
<dbReference type="PDB" id="7TOS">
    <property type="method" value="EM"/>
    <property type="resolution" value="2.90 A"/>
    <property type="chains" value="L21=1-103"/>
</dbReference>
<dbReference type="PDB" id="7UG7">
    <property type="method" value="EM"/>
    <property type="resolution" value="2.58 A"/>
    <property type="chains" value="LU=1-103"/>
</dbReference>
<dbReference type="PDB" id="7UPH">
    <property type="method" value="EM"/>
    <property type="resolution" value="4.18 A"/>
    <property type="chains" value="q=1-103"/>
</dbReference>
<dbReference type="PDB" id="7Y7C">
    <property type="method" value="EM"/>
    <property type="resolution" value="2.51 A"/>
    <property type="chains" value="q=1-103"/>
</dbReference>
<dbReference type="PDB" id="7Y7D">
    <property type="method" value="EM"/>
    <property type="resolution" value="2.58 A"/>
    <property type="chains" value="q=1-103"/>
</dbReference>
<dbReference type="PDB" id="7Y7E">
    <property type="method" value="EM"/>
    <property type="resolution" value="2.41 A"/>
    <property type="chains" value="q=1-103"/>
</dbReference>
<dbReference type="PDB" id="7Y7F">
    <property type="method" value="EM"/>
    <property type="resolution" value="2.43 A"/>
    <property type="chains" value="q=1-103"/>
</dbReference>
<dbReference type="PDB" id="7Y7G">
    <property type="method" value="EM"/>
    <property type="resolution" value="2.34 A"/>
    <property type="chains" value="q=1-103"/>
</dbReference>
<dbReference type="PDB" id="7Y7H">
    <property type="method" value="EM"/>
    <property type="resolution" value="2.51 A"/>
    <property type="chains" value="q=1-103"/>
</dbReference>
<dbReference type="PDB" id="7YLA">
    <property type="method" value="EM"/>
    <property type="resolution" value="2.52 A"/>
    <property type="chains" value="Z=1-103"/>
</dbReference>
<dbReference type="PDB" id="7Z20">
    <property type="method" value="EM"/>
    <property type="resolution" value="2.29 A"/>
    <property type="chains" value="r=1-103"/>
</dbReference>
<dbReference type="PDB" id="7ZOD">
    <property type="method" value="EM"/>
    <property type="resolution" value="2.56 A"/>
    <property type="chains" value="r=1-103"/>
</dbReference>
<dbReference type="PDB" id="7ZP8">
    <property type="method" value="EM"/>
    <property type="resolution" value="2.20 A"/>
    <property type="chains" value="r=1-103"/>
</dbReference>
<dbReference type="PDB" id="7ZQ5">
    <property type="method" value="EM"/>
    <property type="resolution" value="2.70 A"/>
    <property type="chains" value="r=1-103"/>
</dbReference>
<dbReference type="PDB" id="7ZQ6">
    <property type="method" value="EM"/>
    <property type="resolution" value="2.75 A"/>
    <property type="chains" value="r=1-103"/>
</dbReference>
<dbReference type="PDB" id="7ZTA">
    <property type="method" value="EM"/>
    <property type="resolution" value="2.70 A"/>
    <property type="chains" value="L211=1-103"/>
</dbReference>
<dbReference type="PDB" id="8A3L">
    <property type="method" value="EM"/>
    <property type="resolution" value="3.42 A"/>
    <property type="chains" value="q=1-103"/>
</dbReference>
<dbReference type="PDB" id="8AKN">
    <property type="method" value="EM"/>
    <property type="resolution" value="2.30 A"/>
    <property type="chains" value="q=1-103"/>
</dbReference>
<dbReference type="PDB" id="8AM9">
    <property type="method" value="EM"/>
    <property type="resolution" value="2.80 A"/>
    <property type="chains" value="q=1-103"/>
</dbReference>
<dbReference type="PDB" id="8ANA">
    <property type="method" value="EM"/>
    <property type="resolution" value="2.10 A"/>
    <property type="chains" value="q=1-103"/>
</dbReference>
<dbReference type="PDB" id="8AP4">
    <property type="method" value="EM"/>
    <property type="resolution" value="3.00 A"/>
    <property type="chains" value="q=1-103"/>
</dbReference>
<dbReference type="PDB" id="8AYE">
    <property type="method" value="EM"/>
    <property type="resolution" value="1.96 A"/>
    <property type="chains" value="q=1-103"/>
</dbReference>
<dbReference type="PDB" id="8B0X">
    <property type="method" value="EM"/>
    <property type="resolution" value="1.55 A"/>
    <property type="chains" value="q=1-103"/>
</dbReference>
<dbReference type="PDB" id="8B7Y">
    <property type="method" value="EM"/>
    <property type="resolution" value="3.00 A"/>
    <property type="chains" value="Z=1-103"/>
</dbReference>
<dbReference type="PDB" id="8BF7">
    <property type="method" value="EM"/>
    <property type="resolution" value="2.33 A"/>
    <property type="chains" value="O=1-103"/>
</dbReference>
<dbReference type="PDB" id="8BGE">
    <property type="method" value="EM"/>
    <property type="resolution" value="2.11 A"/>
    <property type="chains" value="O=1-103"/>
</dbReference>
<dbReference type="PDB" id="8BGH">
    <property type="method" value="EM"/>
    <property type="resolution" value="2.88 A"/>
    <property type="chains" value="O=1-103"/>
</dbReference>
<dbReference type="PDB" id="8BH4">
    <property type="method" value="EM"/>
    <property type="resolution" value="2.62 A"/>
    <property type="chains" value="O=1-103"/>
</dbReference>
<dbReference type="PDB" id="8BHJ">
    <property type="method" value="EM"/>
    <property type="resolution" value="2.81 A"/>
    <property type="chains" value="O=1-103"/>
</dbReference>
<dbReference type="PDB" id="8BHL">
    <property type="method" value="EM"/>
    <property type="resolution" value="2.21 A"/>
    <property type="chains" value="O=1-103"/>
</dbReference>
<dbReference type="PDB" id="8BHN">
    <property type="method" value="EM"/>
    <property type="resolution" value="2.85 A"/>
    <property type="chains" value="O=1-103"/>
</dbReference>
<dbReference type="PDB" id="8BHP">
    <property type="method" value="EM"/>
    <property type="resolution" value="2.37 A"/>
    <property type="chains" value="O=1-103"/>
</dbReference>
<dbReference type="PDB" id="8BIL">
    <property type="method" value="EM"/>
    <property type="resolution" value="2.04 A"/>
    <property type="chains" value="O=1-103"/>
</dbReference>
<dbReference type="PDB" id="8BIM">
    <property type="method" value="EM"/>
    <property type="resolution" value="2.04 A"/>
    <property type="chains" value="O=1-103"/>
</dbReference>
<dbReference type="PDB" id="8C8X">
    <property type="method" value="EM"/>
    <property type="resolution" value="3.93 A"/>
    <property type="chains" value="R=1-103"/>
</dbReference>
<dbReference type="PDB" id="8C8Y">
    <property type="method" value="EM"/>
    <property type="resolution" value="3.03 A"/>
    <property type="chains" value="R=1-103"/>
</dbReference>
<dbReference type="PDB" id="8C8Z">
    <property type="method" value="EM"/>
    <property type="resolution" value="3.12 A"/>
    <property type="chains" value="R=1-103"/>
</dbReference>
<dbReference type="PDB" id="8C90">
    <property type="method" value="EM"/>
    <property type="resolution" value="3.15 A"/>
    <property type="chains" value="R=1-103"/>
</dbReference>
<dbReference type="PDB" id="8C91">
    <property type="method" value="EM"/>
    <property type="resolution" value="4.19 A"/>
    <property type="chains" value="R=1-103"/>
</dbReference>
<dbReference type="PDB" id="8C92">
    <property type="method" value="EM"/>
    <property type="resolution" value="3.79 A"/>
    <property type="chains" value="R=1-103"/>
</dbReference>
<dbReference type="PDB" id="8C93">
    <property type="method" value="EM"/>
    <property type="resolution" value="4.17 A"/>
    <property type="chains" value="R=1-103"/>
</dbReference>
<dbReference type="PDB" id="8C94">
    <property type="method" value="EM"/>
    <property type="resolution" value="3.80 A"/>
    <property type="chains" value="R=1-103"/>
</dbReference>
<dbReference type="PDB" id="8C95">
    <property type="method" value="EM"/>
    <property type="resolution" value="4.92 A"/>
    <property type="chains" value="R=1-103"/>
</dbReference>
<dbReference type="PDB" id="8C96">
    <property type="method" value="EM"/>
    <property type="resolution" value="4.43 A"/>
    <property type="chains" value="R=1-103"/>
</dbReference>
<dbReference type="PDB" id="8C98">
    <property type="method" value="EM"/>
    <property type="resolution" value="3.66 A"/>
    <property type="chains" value="R=1-103"/>
</dbReference>
<dbReference type="PDB" id="8C99">
    <property type="method" value="EM"/>
    <property type="resolution" value="3.29 A"/>
    <property type="chains" value="R=1-103"/>
</dbReference>
<dbReference type="PDB" id="8CAM">
    <property type="method" value="EM"/>
    <property type="resolution" value="1.86 A"/>
    <property type="chains" value="q=1-103"/>
</dbReference>
<dbReference type="PDB" id="8CEU">
    <property type="method" value="EM"/>
    <property type="resolution" value="1.83 A"/>
    <property type="chains" value="q=1-103"/>
</dbReference>
<dbReference type="PDB" id="8CGD">
    <property type="method" value="EM"/>
    <property type="resolution" value="1.98 A"/>
    <property type="chains" value="q=1-103"/>
</dbReference>
<dbReference type="PDB" id="8CGK">
    <property type="method" value="EM"/>
    <property type="resolution" value="1.64 A"/>
    <property type="chains" value="q=1-103"/>
</dbReference>
<dbReference type="PDB" id="8CGV">
    <property type="method" value="EM"/>
    <property type="resolution" value="1.66 A"/>
    <property type="chains" value="q=1-103"/>
</dbReference>
<dbReference type="PDB" id="8EIU">
    <property type="method" value="EM"/>
    <property type="resolution" value="2.24 A"/>
    <property type="chains" value="q=1-103"/>
</dbReference>
<dbReference type="PDB" id="8EKC">
    <property type="method" value="EM"/>
    <property type="resolution" value="2.70 A"/>
    <property type="chains" value="T=1-103"/>
</dbReference>
<dbReference type="PDB" id="8EMM">
    <property type="method" value="EM"/>
    <property type="resolution" value="2.10 A"/>
    <property type="chains" value="q=1-103"/>
</dbReference>
<dbReference type="PDB" id="8FIZ">
    <property type="method" value="EM"/>
    <property type="resolution" value="3.80 A"/>
    <property type="chains" value="BY=1-103"/>
</dbReference>
<dbReference type="PDB" id="8FTO">
    <property type="method" value="EM"/>
    <property type="resolution" value="1.85 A"/>
    <property type="chains" value="q=1-103"/>
</dbReference>
<dbReference type="PDB" id="8FZD">
    <property type="method" value="EM"/>
    <property type="resolution" value="3.10 A"/>
    <property type="chains" value="T=1-103"/>
</dbReference>
<dbReference type="PDB" id="8FZE">
    <property type="method" value="EM"/>
    <property type="resolution" value="3.00 A"/>
    <property type="chains" value="T=1-103"/>
</dbReference>
<dbReference type="PDB" id="8FZF">
    <property type="method" value="EM"/>
    <property type="resolution" value="3.20 A"/>
    <property type="chains" value="T=1-103"/>
</dbReference>
<dbReference type="PDB" id="8FZG">
    <property type="method" value="EM"/>
    <property type="resolution" value="3.10 A"/>
    <property type="chains" value="T=1-103"/>
</dbReference>
<dbReference type="PDB" id="8FZH">
    <property type="method" value="EM"/>
    <property type="resolution" value="2.90 A"/>
    <property type="chains" value="T=1-103"/>
</dbReference>
<dbReference type="PDB" id="8FZI">
    <property type="method" value="EM"/>
    <property type="resolution" value="3.10 A"/>
    <property type="chains" value="T=1-103"/>
</dbReference>
<dbReference type="PDB" id="8FZJ">
    <property type="method" value="EM"/>
    <property type="resolution" value="3.00 A"/>
    <property type="chains" value="T=1-103"/>
</dbReference>
<dbReference type="PDB" id="8G2U">
    <property type="method" value="EM"/>
    <property type="resolution" value="3.00 A"/>
    <property type="chains" value="R=1-103"/>
</dbReference>
<dbReference type="PDB" id="8G31">
    <property type="method" value="EM"/>
    <property type="resolution" value="3.20 A"/>
    <property type="chains" value="R=1-103"/>
</dbReference>
<dbReference type="PDB" id="8G34">
    <property type="method" value="EM"/>
    <property type="resolution" value="3.20 A"/>
    <property type="chains" value="R=1-103"/>
</dbReference>
<dbReference type="PDB" id="8G38">
    <property type="method" value="EM"/>
    <property type="resolution" value="3.20 A"/>
    <property type="chains" value="R=1-103"/>
</dbReference>
<dbReference type="PDB" id="8G6W">
    <property type="method" value="EM"/>
    <property type="resolution" value="2.02 A"/>
    <property type="chains" value="q=1-103"/>
</dbReference>
<dbReference type="PDB" id="8G6X">
    <property type="method" value="EM"/>
    <property type="resolution" value="2.31 A"/>
    <property type="chains" value="q=1-103"/>
</dbReference>
<dbReference type="PDB" id="8G6Y">
    <property type="method" value="EM"/>
    <property type="resolution" value="2.09 A"/>
    <property type="chains" value="q=1-103"/>
</dbReference>
<dbReference type="PDB" id="8G7P">
    <property type="method" value="EM"/>
    <property type="resolution" value="2.90 A"/>
    <property type="chains" value="T=1-103"/>
</dbReference>
<dbReference type="PDB" id="8G7Q">
    <property type="method" value="EM"/>
    <property type="resolution" value="3.10 A"/>
    <property type="chains" value="T=1-103"/>
</dbReference>
<dbReference type="PDB" id="8G7R">
    <property type="method" value="EM"/>
    <property type="resolution" value="2.80 A"/>
    <property type="chains" value="T=1-103"/>
</dbReference>
<dbReference type="PDB" id="8G7S">
    <property type="method" value="EM"/>
    <property type="resolution" value="3.10 A"/>
    <property type="chains" value="T=1-103"/>
</dbReference>
<dbReference type="PDB" id="8HSP">
    <property type="method" value="EM"/>
    <property type="resolution" value="2.32 A"/>
    <property type="chains" value="q=1-103"/>
</dbReference>
<dbReference type="PDB" id="8HTZ">
    <property type="method" value="EM"/>
    <property type="resolution" value="2.40 A"/>
    <property type="chains" value="q=1-103"/>
</dbReference>
<dbReference type="PDB" id="8HU1">
    <property type="method" value="EM"/>
    <property type="resolution" value="2.69 A"/>
    <property type="chains" value="q=1-103"/>
</dbReference>
<dbReference type="PDB" id="8IFB">
    <property type="method" value="EM"/>
    <property type="resolution" value="2.43 A"/>
    <property type="chains" value="q=1-103"/>
</dbReference>
<dbReference type="PDB" id="8IFC">
    <property type="method" value="EM"/>
    <property type="resolution" value="2.90 A"/>
    <property type="chains" value="q=1-103"/>
</dbReference>
<dbReference type="PDB" id="8J1Z">
    <property type="method" value="EM"/>
    <property type="resolution" value="2.60 A"/>
    <property type="chains" value="q=1-103"/>
</dbReference>
<dbReference type="PDB" id="8P16">
    <property type="method" value="EM"/>
    <property type="resolution" value="2.77 A"/>
    <property type="chains" value="R=1-103"/>
</dbReference>
<dbReference type="PDB" id="8P17">
    <property type="method" value="EM"/>
    <property type="resolution" value="2.78 A"/>
    <property type="chains" value="R=1-103"/>
</dbReference>
<dbReference type="PDB" id="8P18">
    <property type="method" value="EM"/>
    <property type="resolution" value="2.77 A"/>
    <property type="chains" value="R=1-103"/>
</dbReference>
<dbReference type="PDB" id="8PEG">
    <property type="method" value="EM"/>
    <property type="resolution" value="3.30 A"/>
    <property type="chains" value="u=1-103"/>
</dbReference>
<dbReference type="PDB" id="8PHJ">
    <property type="method" value="EM"/>
    <property type="resolution" value="3.67 A"/>
    <property type="chains" value="q=1-103"/>
</dbReference>
<dbReference type="PDB" id="8PKL">
    <property type="method" value="EM"/>
    <property type="resolution" value="3.09 A"/>
    <property type="chains" value="u=1-103"/>
</dbReference>
<dbReference type="PDB" id="8PVA">
    <property type="method" value="EM"/>
    <property type="resolution" value="4.50 A"/>
    <property type="chains" value="q=1-103"/>
</dbReference>
<dbReference type="PDB" id="8Q4F">
    <property type="method" value="EM"/>
    <property type="resolution" value="3.10 A"/>
    <property type="chains" value="q=1-103"/>
</dbReference>
<dbReference type="PDB" id="8QBT">
    <property type="method" value="EM"/>
    <property type="resolution" value="2.20 A"/>
    <property type="chains" value="R=1-103"/>
</dbReference>
<dbReference type="PDB" id="8QK7">
    <property type="method" value="EM"/>
    <property type="resolution" value="2.77 A"/>
    <property type="chains" value="R=1-103"/>
</dbReference>
<dbReference type="PDB" id="8QOA">
    <property type="method" value="EM"/>
    <property type="resolution" value="2.00 A"/>
    <property type="chains" value="q=1-103"/>
</dbReference>
<dbReference type="PDB" id="8R6C">
    <property type="method" value="EM"/>
    <property type="resolution" value="2.20 A"/>
    <property type="chains" value="q=1-103"/>
</dbReference>
<dbReference type="PDB" id="8R8M">
    <property type="method" value="EM"/>
    <property type="resolution" value="2.40 A"/>
    <property type="chains" value="q=1-103"/>
</dbReference>
<dbReference type="PDB" id="8RPY">
    <property type="method" value="EM"/>
    <property type="resolution" value="2.64 A"/>
    <property type="chains" value="R=1-103"/>
</dbReference>
<dbReference type="PDB" id="8RPZ">
    <property type="method" value="EM"/>
    <property type="resolution" value="2.44 A"/>
    <property type="chains" value="R=1-103"/>
</dbReference>
<dbReference type="PDB" id="8RQ0">
    <property type="method" value="EM"/>
    <property type="resolution" value="2.44 A"/>
    <property type="chains" value="R=1-103"/>
</dbReference>
<dbReference type="PDB" id="8RQ2">
    <property type="method" value="EM"/>
    <property type="resolution" value="2.44 A"/>
    <property type="chains" value="R=1-103"/>
</dbReference>
<dbReference type="PDB" id="8SYL">
    <property type="method" value="EM"/>
    <property type="resolution" value="2.90 A"/>
    <property type="chains" value="T=1-103"/>
</dbReference>
<dbReference type="PDB" id="8T5D">
    <property type="method" value="EM"/>
    <property type="resolution" value="3.20 A"/>
    <property type="chains" value="R=1-103"/>
</dbReference>
<dbReference type="PDB" id="8T5H">
    <property type="method" value="EM"/>
    <property type="resolution" value="3.30 A"/>
    <property type="chains" value="R=1-103"/>
</dbReference>
<dbReference type="PDB" id="8UPO">
    <property type="method" value="EM"/>
    <property type="resolution" value="5.50 A"/>
    <property type="chains" value="0=1-103"/>
</dbReference>
<dbReference type="PDB" id="8UPR">
    <property type="method" value="EM"/>
    <property type="resolution" value="5.30 A"/>
    <property type="chains" value="0=1-103"/>
</dbReference>
<dbReference type="PDB" id="8UQL">
    <property type="method" value="EM"/>
    <property type="resolution" value="3.20 A"/>
    <property type="chains" value="0=1-103"/>
</dbReference>
<dbReference type="PDB" id="8UQM">
    <property type="method" value="EM"/>
    <property type="resolution" value="5.30 A"/>
    <property type="chains" value="0=1-103"/>
</dbReference>
<dbReference type="PDB" id="8UQP">
    <property type="method" value="EM"/>
    <property type="resolution" value="3.80 A"/>
    <property type="chains" value="0=1-103"/>
</dbReference>
<dbReference type="PDB" id="8UR0">
    <property type="method" value="EM"/>
    <property type="resolution" value="3.40 A"/>
    <property type="chains" value="0=1-103"/>
</dbReference>
<dbReference type="PDB" id="8URH">
    <property type="method" value="EM"/>
    <property type="resolution" value="5.70 A"/>
    <property type="chains" value="0=1-103"/>
</dbReference>
<dbReference type="PDB" id="8URI">
    <property type="method" value="EM"/>
    <property type="resolution" value="5.30 A"/>
    <property type="chains" value="0=1-103"/>
</dbReference>
<dbReference type="PDB" id="8URX">
    <property type="method" value="EM"/>
    <property type="resolution" value="6.60 A"/>
    <property type="chains" value="0=1-103"/>
</dbReference>
<dbReference type="PDB" id="8URY">
    <property type="method" value="EM"/>
    <property type="resolution" value="3.10 A"/>
    <property type="chains" value="0=1-103"/>
</dbReference>
<dbReference type="PDB" id="8VS9">
    <property type="method" value="EM"/>
    <property type="resolution" value="3.90 A"/>
    <property type="chains" value="L21=1-103"/>
</dbReference>
<dbReference type="PDB" id="8VSA">
    <property type="method" value="EM"/>
    <property type="resolution" value="3.70 A"/>
    <property type="chains" value="L21=1-103"/>
</dbReference>
<dbReference type="PDB" id="8W51">
    <property type="method" value="EM"/>
    <property type="resolution" value="2.40 A"/>
    <property type="chains" value="S=1-103"/>
</dbReference>
<dbReference type="PDB" id="8YUO">
    <property type="method" value="EM"/>
    <property type="resolution" value="2.25 A"/>
    <property type="chains" value="q=1-103"/>
</dbReference>
<dbReference type="PDB" id="8YUP">
    <property type="method" value="EM"/>
    <property type="resolution" value="2.39 A"/>
    <property type="chains" value="q=1-103"/>
</dbReference>
<dbReference type="PDB" id="8YUQ">
    <property type="method" value="EM"/>
    <property type="resolution" value="2.41 A"/>
    <property type="chains" value="q=1-103"/>
</dbReference>
<dbReference type="PDB" id="8YUR">
    <property type="method" value="EM"/>
    <property type="resolution" value="2.47 A"/>
    <property type="chains" value="q=1-103"/>
</dbReference>
<dbReference type="PDB" id="8YUS">
    <property type="method" value="EM"/>
    <property type="resolution" value="2.43 A"/>
    <property type="chains" value="q=1-103"/>
</dbReference>
<dbReference type="PDB" id="9CL9">
    <property type="method" value="EM"/>
    <property type="resolution" value="5.04 A"/>
    <property type="chains" value="R=1-103"/>
</dbReference>
<dbReference type="PDB" id="9D89">
    <property type="method" value="EM"/>
    <property type="resolution" value="1.95 A"/>
    <property type="chains" value="q=1-103"/>
</dbReference>
<dbReference type="PDB" id="9FBV">
    <property type="method" value="EM"/>
    <property type="resolution" value="2.40 A"/>
    <property type="chains" value="q=1-103"/>
</dbReference>
<dbReference type="PDB" id="9GFT">
    <property type="method" value="EM"/>
    <property type="resolution" value="3.10 A"/>
    <property type="chains" value="Am/e=1-103"/>
</dbReference>
<dbReference type="PDB" id="9GGR">
    <property type="method" value="EM"/>
    <property type="resolution" value="3.20 A"/>
    <property type="chains" value="Am/e=1-103"/>
</dbReference>
<dbReference type="PDB" id="9H3K">
    <property type="method" value="EM"/>
    <property type="resolution" value="6.62 A"/>
    <property type="chains" value="R=1-103"/>
</dbReference>
<dbReference type="PDB" id="9H3L">
    <property type="method" value="EM"/>
    <property type="resolution" value="5.84 A"/>
    <property type="chains" value="R=1-103"/>
</dbReference>
<dbReference type="PDB" id="9H3M">
    <property type="method" value="EM"/>
    <property type="resolution" value="4.41 A"/>
    <property type="chains" value="R=1-103"/>
</dbReference>
<dbReference type="PDB" id="9H3N">
    <property type="method" value="EM"/>
    <property type="resolution" value="3.69 A"/>
    <property type="chains" value="R=1-103"/>
</dbReference>
<dbReference type="PDB" id="9H3O">
    <property type="method" value="EM"/>
    <property type="resolution" value="4.54 A"/>
    <property type="chains" value="R=1-103"/>
</dbReference>
<dbReference type="PDB" id="9H3P">
    <property type="method" value="EM"/>
    <property type="resolution" value="7.06 A"/>
    <property type="chains" value="R=1-103"/>
</dbReference>
<dbReference type="PDB" id="9H3Q">
    <property type="method" value="EM"/>
    <property type="resolution" value="4.02 A"/>
    <property type="chains" value="R=1-103"/>
</dbReference>
<dbReference type="PDB" id="9H3R">
    <property type="method" value="EM"/>
    <property type="resolution" value="4.12 A"/>
    <property type="chains" value="R=1-103"/>
</dbReference>
<dbReference type="PDB" id="9H3S">
    <property type="method" value="EM"/>
    <property type="resolution" value="4.16 A"/>
    <property type="chains" value="R=1-103"/>
</dbReference>
<dbReference type="PDB" id="9H3T">
    <property type="method" value="EM"/>
    <property type="resolution" value="3.85 A"/>
    <property type="chains" value="R=1-103"/>
</dbReference>
<dbReference type="PDB" id="9H3U">
    <property type="method" value="EM"/>
    <property type="resolution" value="3.47 A"/>
    <property type="chains" value="R=1-103"/>
</dbReference>
<dbReference type="PDB" id="9H3V">
    <property type="method" value="EM"/>
    <property type="resolution" value="3.55 A"/>
    <property type="chains" value="R=1-103"/>
</dbReference>
<dbReference type="PDB" id="9H3W">
    <property type="method" value="EM"/>
    <property type="resolution" value="5.38 A"/>
    <property type="chains" value="R=1-103"/>
</dbReference>
<dbReference type="PDB" id="9H3X">
    <property type="method" value="EM"/>
    <property type="resolution" value="4.12 A"/>
    <property type="chains" value="R=1-103"/>
</dbReference>
<dbReference type="PDB" id="9H3Y">
    <property type="method" value="EM"/>
    <property type="resolution" value="3.09 A"/>
    <property type="chains" value="R=1-103"/>
</dbReference>
<dbReference type="PDB" id="9H3Z">
    <property type="method" value="EM"/>
    <property type="resolution" value="2.98 A"/>
    <property type="chains" value="R=1-103"/>
</dbReference>
<dbReference type="PDB" id="9HA1">
    <property type="method" value="EM"/>
    <property type="resolution" value="4.17 A"/>
    <property type="chains" value="R=1-103"/>
</dbReference>
<dbReference type="PDB" id="9HA2">
    <property type="method" value="EM"/>
    <property type="resolution" value="4.17 A"/>
    <property type="chains" value="R=1-103"/>
</dbReference>
<dbReference type="PDB" id="9HA3">
    <property type="method" value="EM"/>
    <property type="resolution" value="3.62 A"/>
    <property type="chains" value="R=1-103"/>
</dbReference>
<dbReference type="PDB" id="9HA4">
    <property type="method" value="EM"/>
    <property type="resolution" value="4.26 A"/>
    <property type="chains" value="R=1-103"/>
</dbReference>
<dbReference type="PDB" id="9HA5">
    <property type="method" value="EM"/>
    <property type="resolution" value="3.30 A"/>
    <property type="chains" value="R=1-103"/>
</dbReference>
<dbReference type="PDB" id="9HA6">
    <property type="method" value="EM"/>
    <property type="resolution" value="3.08 A"/>
    <property type="chains" value="R=1-103"/>
</dbReference>
<dbReference type="PDB" id="9HA7">
    <property type="method" value="EM"/>
    <property type="resolution" value="4.37 A"/>
    <property type="chains" value="R=1-103"/>
</dbReference>
<dbReference type="PDB" id="9HAI">
    <property type="method" value="EM"/>
    <property type="resolution" value="3.01 A"/>
    <property type="chains" value="R=1-103"/>
</dbReference>
<dbReference type="PDB" id="9HAL">
    <property type="method" value="EM"/>
    <property type="resolution" value="4.49 A"/>
    <property type="chains" value="R=1-103"/>
</dbReference>
<dbReference type="PDB" id="9HAM">
    <property type="method" value="EM"/>
    <property type="resolution" value="5.06 A"/>
    <property type="chains" value="R=1-103"/>
</dbReference>
<dbReference type="PDB" id="9MOR">
    <property type="method" value="EM"/>
    <property type="resolution" value="2.65 A"/>
    <property type="chains" value="R=1-103"/>
</dbReference>
<dbReference type="PDB" id="9MQ4">
    <property type="method" value="EM"/>
    <property type="resolution" value="2.78 A"/>
    <property type="chains" value="R=1-103"/>
</dbReference>
<dbReference type="PDBsum" id="2J28"/>
<dbReference type="PDBsum" id="2RDO"/>
<dbReference type="PDBsum" id="3BBX"/>
<dbReference type="PDBsum" id="3IY9"/>
<dbReference type="PDBsum" id="3J5L"/>
<dbReference type="PDBsum" id="3J7Z"/>
<dbReference type="PDBsum" id="3J8G"/>
<dbReference type="PDBsum" id="3J9Y"/>
<dbReference type="PDBsum" id="3J9Z"/>
<dbReference type="PDBsum" id="3JA1"/>
<dbReference type="PDBsum" id="3JBU"/>
<dbReference type="PDBsum" id="3JBV"/>
<dbReference type="PDBsum" id="3JCD"/>
<dbReference type="PDBsum" id="3JCE"/>
<dbReference type="PDBsum" id="3JCJ"/>
<dbReference type="PDBsum" id="3JCN"/>
<dbReference type="PDBsum" id="4CSU"/>
<dbReference type="PDBsum" id="4U1U"/>
<dbReference type="PDBsum" id="4U1V"/>
<dbReference type="PDBsum" id="4U20"/>
<dbReference type="PDBsum" id="4U24"/>
<dbReference type="PDBsum" id="4U25"/>
<dbReference type="PDBsum" id="4U26"/>
<dbReference type="PDBsum" id="4U27"/>
<dbReference type="PDBsum" id="4UY8"/>
<dbReference type="PDBsum" id="4V4H"/>
<dbReference type="PDBsum" id="4V4Q"/>
<dbReference type="PDBsum" id="4V50"/>
<dbReference type="PDBsum" id="4V52"/>
<dbReference type="PDBsum" id="4V53"/>
<dbReference type="PDBsum" id="4V54"/>
<dbReference type="PDBsum" id="4V55"/>
<dbReference type="PDBsum" id="4V56"/>
<dbReference type="PDBsum" id="4V57"/>
<dbReference type="PDBsum" id="4V5B"/>
<dbReference type="PDBsum" id="4V5H"/>
<dbReference type="PDBsum" id="4V5Y"/>
<dbReference type="PDBsum" id="4V64"/>
<dbReference type="PDBsum" id="4V65"/>
<dbReference type="PDBsum" id="4V66"/>
<dbReference type="PDBsum" id="4V69"/>
<dbReference type="PDBsum" id="4V6C"/>
<dbReference type="PDBsum" id="4V6D"/>
<dbReference type="PDBsum" id="4V6E"/>
<dbReference type="PDBsum" id="4V6K"/>
<dbReference type="PDBsum" id="4V6L"/>
<dbReference type="PDBsum" id="4V6M"/>
<dbReference type="PDBsum" id="4V6N"/>
<dbReference type="PDBsum" id="4V6O"/>
<dbReference type="PDBsum" id="4V6P"/>
<dbReference type="PDBsum" id="4V6Q"/>
<dbReference type="PDBsum" id="4V6R"/>
<dbReference type="PDBsum" id="4V6S"/>
<dbReference type="PDBsum" id="4V6T"/>
<dbReference type="PDBsum" id="4V6V"/>
<dbReference type="PDBsum" id="4V6Y"/>
<dbReference type="PDBsum" id="4V6Z"/>
<dbReference type="PDBsum" id="4V70"/>
<dbReference type="PDBsum" id="4V71"/>
<dbReference type="PDBsum" id="4V72"/>
<dbReference type="PDBsum" id="4V73"/>
<dbReference type="PDBsum" id="4V74"/>
<dbReference type="PDBsum" id="4V75"/>
<dbReference type="PDBsum" id="4V76"/>
<dbReference type="PDBsum" id="4V77"/>
<dbReference type="PDBsum" id="4V78"/>
<dbReference type="PDBsum" id="4V79"/>
<dbReference type="PDBsum" id="4V7A"/>
<dbReference type="PDBsum" id="4V7B"/>
<dbReference type="PDBsum" id="4V7C"/>
<dbReference type="PDBsum" id="4V7D"/>
<dbReference type="PDBsum" id="4V7I"/>
<dbReference type="PDBsum" id="4V7S"/>
<dbReference type="PDBsum" id="4V7T"/>
<dbReference type="PDBsum" id="4V7U"/>
<dbReference type="PDBsum" id="4V7V"/>
<dbReference type="PDBsum" id="4V85"/>
<dbReference type="PDBsum" id="4V89"/>
<dbReference type="PDBsum" id="4V9C"/>
<dbReference type="PDBsum" id="4V9D"/>
<dbReference type="PDBsum" id="4V9O"/>
<dbReference type="PDBsum" id="4V9P"/>
<dbReference type="PDBsum" id="4WF1"/>
<dbReference type="PDBsum" id="4WOI"/>
<dbReference type="PDBsum" id="4WWW"/>
<dbReference type="PDBsum" id="4YBB"/>
<dbReference type="PDBsum" id="5ADY"/>
<dbReference type="PDBsum" id="5AFI"/>
<dbReference type="PDBsum" id="5AKA"/>
<dbReference type="PDBsum" id="5GAD"/>
<dbReference type="PDBsum" id="5GAE"/>
<dbReference type="PDBsum" id="5GAF"/>
<dbReference type="PDBsum" id="5GAG"/>
<dbReference type="PDBsum" id="5GAH"/>
<dbReference type="PDBsum" id="5H5U"/>
<dbReference type="PDBsum" id="5IQR"/>
<dbReference type="PDBsum" id="5IT8"/>
<dbReference type="PDBsum" id="5J5B"/>
<dbReference type="PDBsum" id="5J7L"/>
<dbReference type="PDBsum" id="5J88"/>
<dbReference type="PDBsum" id="5J8A"/>
<dbReference type="PDBsum" id="5J91"/>
<dbReference type="PDBsum" id="5JC9"/>
<dbReference type="PDBsum" id="5JTE"/>
<dbReference type="PDBsum" id="5JU8"/>
<dbReference type="PDBsum" id="5KCR"/>
<dbReference type="PDBsum" id="5KCS"/>
<dbReference type="PDBsum" id="5KPS"/>
<dbReference type="PDBsum" id="5KPV"/>
<dbReference type="PDBsum" id="5KPW"/>
<dbReference type="PDBsum" id="5KPX"/>
<dbReference type="PDBsum" id="5L3P"/>
<dbReference type="PDBsum" id="5LZA"/>
<dbReference type="PDBsum" id="5LZB"/>
<dbReference type="PDBsum" id="5LZC"/>
<dbReference type="PDBsum" id="5LZD"/>
<dbReference type="PDBsum" id="5LZE"/>
<dbReference type="PDBsum" id="5LZF"/>
<dbReference type="PDBsum" id="5MDV"/>
<dbReference type="PDBsum" id="5MDW"/>
<dbReference type="PDBsum" id="5MDY"/>
<dbReference type="PDBsum" id="5MDZ"/>
<dbReference type="PDBsum" id="5MGP"/>
<dbReference type="PDBsum" id="5NCO"/>
<dbReference type="PDBsum" id="5NP6"/>
<dbReference type="PDBsum" id="5NWY"/>
<dbReference type="PDBsum" id="5O2R"/>
<dbReference type="PDBsum" id="5U4I"/>
<dbReference type="PDBsum" id="5U9F"/>
<dbReference type="PDBsum" id="5U9G"/>
<dbReference type="PDBsum" id="5UYK"/>
<dbReference type="PDBsum" id="5UYL"/>
<dbReference type="PDBsum" id="5UYM"/>
<dbReference type="PDBsum" id="5UYN"/>
<dbReference type="PDBsum" id="5UYP"/>
<dbReference type="PDBsum" id="5UYQ"/>
<dbReference type="PDBsum" id="5WDT"/>
<dbReference type="PDBsum" id="5WE4"/>
<dbReference type="PDBsum" id="5WE6"/>
<dbReference type="PDBsum" id="5WF0"/>
<dbReference type="PDBsum" id="5WFK"/>
<dbReference type="PDBsum" id="5WFS"/>
<dbReference type="PDBsum" id="6BU8"/>
<dbReference type="PDBsum" id="6BY1"/>
<dbReference type="PDBsum" id="6C4I"/>
<dbReference type="PDBsum" id="6DNC"/>
<dbReference type="PDBsum" id="6ENF"/>
<dbReference type="PDBsum" id="6ENJ"/>
<dbReference type="PDBsum" id="6ENU"/>
<dbReference type="PDBsum" id="6GBZ"/>
<dbReference type="PDBsum" id="6GC0"/>
<dbReference type="PDBsum" id="6GC4"/>
<dbReference type="PDBsum" id="6GC6"/>
<dbReference type="PDBsum" id="6GC7"/>
<dbReference type="PDBsum" id="6GC8"/>
<dbReference type="PDBsum" id="6GWT"/>
<dbReference type="PDBsum" id="6GXM"/>
<dbReference type="PDBsum" id="6GXN"/>
<dbReference type="PDBsum" id="6GXO"/>
<dbReference type="PDBsum" id="6GXP"/>
<dbReference type="PDBsum" id="6H4N"/>
<dbReference type="PDBsum" id="6H58"/>
<dbReference type="PDBsum" id="6HRM"/>
<dbReference type="PDBsum" id="6I0Y"/>
<dbReference type="PDBsum" id="6I7V"/>
<dbReference type="PDBsum" id="6O9J"/>
<dbReference type="PDBsum" id="6O9K"/>
<dbReference type="PDBsum" id="6OFX"/>
<dbReference type="PDBsum" id="6OG7"/>
<dbReference type="PDBsum" id="6OGF"/>
<dbReference type="PDBsum" id="6OGG"/>
<dbReference type="PDBsum" id="6OGI"/>
<dbReference type="PDBsum" id="6OM6"/>
<dbReference type="PDBsum" id="6ORE"/>
<dbReference type="PDBsum" id="6ORL"/>
<dbReference type="PDBsum" id="6OSK"/>
<dbReference type="PDBsum" id="6OSQ"/>
<dbReference type="PDBsum" id="6OST"/>
<dbReference type="PDBsum" id="6OT3"/>
<dbReference type="PDBsum" id="6OUO"/>
<dbReference type="PDBsum" id="6PJ6"/>
<dbReference type="PDBsum" id="6Q97"/>
<dbReference type="PDBsum" id="6Q98"/>
<dbReference type="PDBsum" id="6Q9A"/>
<dbReference type="PDBsum" id="6QDW"/>
<dbReference type="PDBsum" id="6QUL"/>
<dbReference type="PDBsum" id="6S0K"/>
<dbReference type="PDBsum" id="6SZS"/>
<dbReference type="PDBsum" id="6TBV"/>
<dbReference type="PDBsum" id="6TC3"/>
<dbReference type="PDBsum" id="6U48"/>
<dbReference type="PDBsum" id="6VU3"/>
<dbReference type="PDBsum" id="6VWL"/>
<dbReference type="PDBsum" id="6VWM"/>
<dbReference type="PDBsum" id="6VWN"/>
<dbReference type="PDBsum" id="6VYQ"/>
<dbReference type="PDBsum" id="6VYR"/>
<dbReference type="PDBsum" id="6VYS"/>
<dbReference type="PDBsum" id="6VYT"/>
<dbReference type="PDBsum" id="6VYU"/>
<dbReference type="PDBsum" id="6VYW"/>
<dbReference type="PDBsum" id="6VYX"/>
<dbReference type="PDBsum" id="6VYY"/>
<dbReference type="PDBsum" id="6VYZ"/>
<dbReference type="PDBsum" id="6VZ2"/>
<dbReference type="PDBsum" id="6VZ3"/>
<dbReference type="PDBsum" id="6VZ5"/>
<dbReference type="PDBsum" id="6VZ7"/>
<dbReference type="PDBsum" id="6VZJ"/>
<dbReference type="PDBsum" id="6WD0"/>
<dbReference type="PDBsum" id="6WD1"/>
<dbReference type="PDBsum" id="6WD2"/>
<dbReference type="PDBsum" id="6WD3"/>
<dbReference type="PDBsum" id="6WD4"/>
<dbReference type="PDBsum" id="6WD5"/>
<dbReference type="PDBsum" id="6WD6"/>
<dbReference type="PDBsum" id="6WD7"/>
<dbReference type="PDBsum" id="6WD8"/>
<dbReference type="PDBsum" id="6WD9"/>
<dbReference type="PDBsum" id="6WDA"/>
<dbReference type="PDBsum" id="6WDB"/>
<dbReference type="PDBsum" id="6WDC"/>
<dbReference type="PDBsum" id="6WDD"/>
<dbReference type="PDBsum" id="6WDE"/>
<dbReference type="PDBsum" id="6WDF"/>
<dbReference type="PDBsum" id="6WDG"/>
<dbReference type="PDBsum" id="6WDH"/>
<dbReference type="PDBsum" id="6WDI"/>
<dbReference type="PDBsum" id="6WDJ"/>
<dbReference type="PDBsum" id="6WDK"/>
<dbReference type="PDBsum" id="6WDL"/>
<dbReference type="PDBsum" id="6WDM"/>
<dbReference type="PDBsum" id="6WNT"/>
<dbReference type="PDBsum" id="6WNV"/>
<dbReference type="PDBsum" id="6WNW"/>
<dbReference type="PDBsum" id="6X6T"/>
<dbReference type="PDBsum" id="6X7F"/>
<dbReference type="PDBsum" id="6X7K"/>
<dbReference type="PDBsum" id="6X9Q"/>
<dbReference type="PDBsum" id="6XDQ"/>
<dbReference type="PDBsum" id="6XDR"/>
<dbReference type="PDBsum" id="6XGF"/>
<dbReference type="PDBsum" id="6XII"/>
<dbReference type="PDBsum" id="6XIJ"/>
<dbReference type="PDBsum" id="6XZ7"/>
<dbReference type="PDBsum" id="6XZA"/>
<dbReference type="PDBsum" id="6XZB"/>
<dbReference type="PDBsum" id="6Y69"/>
<dbReference type="PDBsum" id="6YS3"/>
<dbReference type="PDBsum" id="6YSR"/>
<dbReference type="PDBsum" id="6YSS"/>
<dbReference type="PDBsum" id="6YST"/>
<dbReference type="PDBsum" id="6YSU"/>
<dbReference type="PDBsum" id="6ZTJ"/>
<dbReference type="PDBsum" id="6ZTL"/>
<dbReference type="PDBsum" id="6ZTM"/>
<dbReference type="PDBsum" id="6ZTN"/>
<dbReference type="PDBsum" id="6ZTO"/>
<dbReference type="PDBsum" id="6ZTP"/>
<dbReference type="PDBsum" id="6ZU1"/>
<dbReference type="PDBsum" id="7ABZ"/>
<dbReference type="PDBsum" id="7AC7"/>
<dbReference type="PDBsum" id="7ACJ"/>
<dbReference type="PDBsum" id="7ACR"/>
<dbReference type="PDBsum" id="7B5K"/>
<dbReference type="PDBsum" id="7BL2"/>
<dbReference type="PDBsum" id="7BL3"/>
<dbReference type="PDBsum" id="7BL4"/>
<dbReference type="PDBsum" id="7BL5"/>
<dbReference type="PDBsum" id="7BL6"/>
<dbReference type="PDBsum" id="7BV8"/>
<dbReference type="PDBsum" id="7D6Z"/>
<dbReference type="PDBsum" id="7D80"/>
<dbReference type="PDBsum" id="7JSS"/>
<dbReference type="PDBsum" id="7JSW"/>
<dbReference type="PDBsum" id="7JSZ"/>
<dbReference type="PDBsum" id="7JT1"/>
<dbReference type="PDBsum" id="7JT2"/>
<dbReference type="PDBsum" id="7JT3"/>
<dbReference type="PDBsum" id="7K00"/>
<dbReference type="PDBsum" id="7K50"/>
<dbReference type="PDBsum" id="7K51"/>
<dbReference type="PDBsum" id="7K52"/>
<dbReference type="PDBsum" id="7K53"/>
<dbReference type="PDBsum" id="7K54"/>
<dbReference type="PDBsum" id="7K55"/>
<dbReference type="PDBsum" id="7LV0"/>
<dbReference type="PDBsum" id="7LVK"/>
<dbReference type="PDBsum" id="7M5D"/>
<dbReference type="PDBsum" id="7N1P"/>
<dbReference type="PDBsum" id="7N2C"/>
<dbReference type="PDBsum" id="7N2U"/>
<dbReference type="PDBsum" id="7N2V"/>
<dbReference type="PDBsum" id="7N30"/>
<dbReference type="PDBsum" id="7N31"/>
<dbReference type="PDBsum" id="7NBU"/>
<dbReference type="PDBsum" id="7NSO"/>
<dbReference type="PDBsum" id="7NSP"/>
<dbReference type="PDBsum" id="7NSQ"/>
<dbReference type="PDBsum" id="7NWT"/>
<dbReference type="PDBsum" id="7NWW"/>
<dbReference type="PDBsum" id="7O19"/>
<dbReference type="PDBsum" id="7O1A"/>
<dbReference type="PDBsum" id="7O1C"/>
<dbReference type="PDBsum" id="7ODE"/>
<dbReference type="PDBsum" id="7OIF"/>
<dbReference type="PDBsum" id="7OIG"/>
<dbReference type="PDBsum" id="7OII"/>
<dbReference type="PDBsum" id="7OIZ"/>
<dbReference type="PDBsum" id="7OJ0"/>
<dbReference type="PDBsum" id="7OT5"/>
<dbReference type="PDBsum" id="7P3K"/>
<dbReference type="PDBsum" id="7PJS"/>
<dbReference type="PDBsum" id="7PJT"/>
<dbReference type="PDBsum" id="7PJU"/>
<dbReference type="PDBsum" id="7PJV"/>
<dbReference type="PDBsum" id="7PJW"/>
<dbReference type="PDBsum" id="7PJX"/>
<dbReference type="PDBsum" id="7PJY"/>
<dbReference type="PDBsum" id="7PJZ"/>
<dbReference type="PDBsum" id="7Q4K"/>
<dbReference type="PDBsum" id="7QG8"/>
<dbReference type="PDBsum" id="7QGH"/>
<dbReference type="PDBsum" id="7QGN"/>
<dbReference type="PDBsum" id="7QGR"/>
<dbReference type="PDBsum" id="7QQ3"/>
<dbReference type="PDBsum" id="7S1G"/>
<dbReference type="PDBsum" id="7S1H"/>
<dbReference type="PDBsum" id="7S1I"/>
<dbReference type="PDBsum" id="7S1J"/>
<dbReference type="PDBsum" id="7S1K"/>
<dbReference type="PDBsum" id="7SA4"/>
<dbReference type="PDBsum" id="7SS9"/>
<dbReference type="PDBsum" id="7SSD"/>
<dbReference type="PDBsum" id="7SSL"/>
<dbReference type="PDBsum" id="7SSN"/>
<dbReference type="PDBsum" id="7SSO"/>
<dbReference type="PDBsum" id="7SSW"/>
<dbReference type="PDBsum" id="7ST2"/>
<dbReference type="PDBsum" id="7ST6"/>
<dbReference type="PDBsum" id="7ST7"/>
<dbReference type="PDBsum" id="7TOS"/>
<dbReference type="PDBsum" id="7UG7"/>
<dbReference type="PDBsum" id="7UPH"/>
<dbReference type="PDBsum" id="7Y7C"/>
<dbReference type="PDBsum" id="7Y7D"/>
<dbReference type="PDBsum" id="7Y7E"/>
<dbReference type="PDBsum" id="7Y7F"/>
<dbReference type="PDBsum" id="7Y7G"/>
<dbReference type="PDBsum" id="7Y7H"/>
<dbReference type="PDBsum" id="7YLA"/>
<dbReference type="PDBsum" id="7Z20"/>
<dbReference type="PDBsum" id="7ZOD"/>
<dbReference type="PDBsum" id="7ZP8"/>
<dbReference type="PDBsum" id="7ZQ5"/>
<dbReference type="PDBsum" id="7ZQ6"/>
<dbReference type="PDBsum" id="7ZTA"/>
<dbReference type="PDBsum" id="8A3L"/>
<dbReference type="PDBsum" id="8AKN"/>
<dbReference type="PDBsum" id="8AM9"/>
<dbReference type="PDBsum" id="8ANA"/>
<dbReference type="PDBsum" id="8AP4"/>
<dbReference type="PDBsum" id="8AYE"/>
<dbReference type="PDBsum" id="8B0X"/>
<dbReference type="PDBsum" id="8B7Y"/>
<dbReference type="PDBsum" id="8BF7"/>
<dbReference type="PDBsum" id="8BGE"/>
<dbReference type="PDBsum" id="8BGH"/>
<dbReference type="PDBsum" id="8BH4"/>
<dbReference type="PDBsum" id="8BHJ"/>
<dbReference type="PDBsum" id="8BHL"/>
<dbReference type="PDBsum" id="8BHN"/>
<dbReference type="PDBsum" id="8BHP"/>
<dbReference type="PDBsum" id="8BIL"/>
<dbReference type="PDBsum" id="8BIM"/>
<dbReference type="PDBsum" id="8C8X"/>
<dbReference type="PDBsum" id="8C8Y"/>
<dbReference type="PDBsum" id="8C8Z"/>
<dbReference type="PDBsum" id="8C90"/>
<dbReference type="PDBsum" id="8C91"/>
<dbReference type="PDBsum" id="8C92"/>
<dbReference type="PDBsum" id="8C93"/>
<dbReference type="PDBsum" id="8C94"/>
<dbReference type="PDBsum" id="8C95"/>
<dbReference type="PDBsum" id="8C96"/>
<dbReference type="PDBsum" id="8C98"/>
<dbReference type="PDBsum" id="8C99"/>
<dbReference type="PDBsum" id="8CAM"/>
<dbReference type="PDBsum" id="8CEU"/>
<dbReference type="PDBsum" id="8CGD"/>
<dbReference type="PDBsum" id="8CGK"/>
<dbReference type="PDBsum" id="8CGV"/>
<dbReference type="PDBsum" id="8EIU"/>
<dbReference type="PDBsum" id="8EKC"/>
<dbReference type="PDBsum" id="8EMM"/>
<dbReference type="PDBsum" id="8FIZ"/>
<dbReference type="PDBsum" id="8FTO"/>
<dbReference type="PDBsum" id="8FZD"/>
<dbReference type="PDBsum" id="8FZE"/>
<dbReference type="PDBsum" id="8FZF"/>
<dbReference type="PDBsum" id="8FZG"/>
<dbReference type="PDBsum" id="8FZH"/>
<dbReference type="PDBsum" id="8FZI"/>
<dbReference type="PDBsum" id="8FZJ"/>
<dbReference type="PDBsum" id="8G2U"/>
<dbReference type="PDBsum" id="8G31"/>
<dbReference type="PDBsum" id="8G34"/>
<dbReference type="PDBsum" id="8G38"/>
<dbReference type="PDBsum" id="8G6W"/>
<dbReference type="PDBsum" id="8G6X"/>
<dbReference type="PDBsum" id="8G6Y"/>
<dbReference type="PDBsum" id="8G7P"/>
<dbReference type="PDBsum" id="8G7Q"/>
<dbReference type="PDBsum" id="8G7R"/>
<dbReference type="PDBsum" id="8G7S"/>
<dbReference type="PDBsum" id="8HSP"/>
<dbReference type="PDBsum" id="8HTZ"/>
<dbReference type="PDBsum" id="8HU1"/>
<dbReference type="PDBsum" id="8IFB"/>
<dbReference type="PDBsum" id="8IFC"/>
<dbReference type="PDBsum" id="8J1Z"/>
<dbReference type="PDBsum" id="8P16"/>
<dbReference type="PDBsum" id="8P17"/>
<dbReference type="PDBsum" id="8P18"/>
<dbReference type="PDBsum" id="8PEG"/>
<dbReference type="PDBsum" id="8PHJ"/>
<dbReference type="PDBsum" id="8PKL"/>
<dbReference type="PDBsum" id="8PVA"/>
<dbReference type="PDBsum" id="8Q4F"/>
<dbReference type="PDBsum" id="8QBT"/>
<dbReference type="PDBsum" id="8QK7"/>
<dbReference type="PDBsum" id="8QOA"/>
<dbReference type="PDBsum" id="8R6C"/>
<dbReference type="PDBsum" id="8R8M"/>
<dbReference type="PDBsum" id="8RPY"/>
<dbReference type="PDBsum" id="8RPZ"/>
<dbReference type="PDBsum" id="8RQ0"/>
<dbReference type="PDBsum" id="8RQ2"/>
<dbReference type="PDBsum" id="8SYL"/>
<dbReference type="PDBsum" id="8T5D"/>
<dbReference type="PDBsum" id="8T5H"/>
<dbReference type="PDBsum" id="8UPO"/>
<dbReference type="PDBsum" id="8UPR"/>
<dbReference type="PDBsum" id="8UQL"/>
<dbReference type="PDBsum" id="8UQM"/>
<dbReference type="PDBsum" id="8UQP"/>
<dbReference type="PDBsum" id="8UR0"/>
<dbReference type="PDBsum" id="8URH"/>
<dbReference type="PDBsum" id="8URI"/>
<dbReference type="PDBsum" id="8URX"/>
<dbReference type="PDBsum" id="8URY"/>
<dbReference type="PDBsum" id="8VS9"/>
<dbReference type="PDBsum" id="8VSA"/>
<dbReference type="PDBsum" id="8W51"/>
<dbReference type="PDBsum" id="8YUO"/>
<dbReference type="PDBsum" id="8YUP"/>
<dbReference type="PDBsum" id="8YUQ"/>
<dbReference type="PDBsum" id="8YUR"/>
<dbReference type="PDBsum" id="8YUS"/>
<dbReference type="PDBsum" id="9CL9"/>
<dbReference type="PDBsum" id="9D89"/>
<dbReference type="PDBsum" id="9FBV"/>
<dbReference type="PDBsum" id="9GFT"/>
<dbReference type="PDBsum" id="9GGR"/>
<dbReference type="PDBsum" id="9H3K"/>
<dbReference type="PDBsum" id="9H3L"/>
<dbReference type="PDBsum" id="9H3M"/>
<dbReference type="PDBsum" id="9H3N"/>
<dbReference type="PDBsum" id="9H3O"/>
<dbReference type="PDBsum" id="9H3P"/>
<dbReference type="PDBsum" id="9H3Q"/>
<dbReference type="PDBsum" id="9H3R"/>
<dbReference type="PDBsum" id="9H3S"/>
<dbReference type="PDBsum" id="9H3T"/>
<dbReference type="PDBsum" id="9H3U"/>
<dbReference type="PDBsum" id="9H3V"/>
<dbReference type="PDBsum" id="9H3W"/>
<dbReference type="PDBsum" id="9H3X"/>
<dbReference type="PDBsum" id="9H3Y"/>
<dbReference type="PDBsum" id="9H3Z"/>
<dbReference type="PDBsum" id="9HA1"/>
<dbReference type="PDBsum" id="9HA2"/>
<dbReference type="PDBsum" id="9HA3"/>
<dbReference type="PDBsum" id="9HA4"/>
<dbReference type="PDBsum" id="9HA5"/>
<dbReference type="PDBsum" id="9HA6"/>
<dbReference type="PDBsum" id="9HA7"/>
<dbReference type="PDBsum" id="9HAI"/>
<dbReference type="PDBsum" id="9HAL"/>
<dbReference type="PDBsum" id="9HAM"/>
<dbReference type="PDBsum" id="9MOR"/>
<dbReference type="PDBsum" id="9MQ4"/>
<dbReference type="EMDB" id="EMD-0076"/>
<dbReference type="EMDB" id="EMD-0080"/>
<dbReference type="EMDB" id="EMD-0081"/>
<dbReference type="EMDB" id="EMD-0082"/>
<dbReference type="EMDB" id="EMD-0083"/>
<dbReference type="EMDB" id="EMD-0137"/>
<dbReference type="EMDB" id="EMD-0139"/>
<dbReference type="EMDB" id="EMD-0261"/>
<dbReference type="EMDB" id="EMD-0322"/>
<dbReference type="EMDB" id="EMD-10073"/>
<dbReference type="EMDB" id="EMD-10353"/>
<dbReference type="EMDB" id="EMD-10453"/>
<dbReference type="EMDB" id="EMD-10458"/>
<dbReference type="EMDB" id="EMD-10655"/>
<dbReference type="EMDB" id="EMD-10656"/>
<dbReference type="EMDB" id="EMD-10657"/>
<dbReference type="EMDB" id="EMD-10705"/>
<dbReference type="EMDB" id="EMD-10905"/>
<dbReference type="EMDB" id="EMD-10906"/>
<dbReference type="EMDB" id="EMD-10907"/>
<dbReference type="EMDB" id="EMD-10908"/>
<dbReference type="EMDB" id="EMD-11418"/>
<dbReference type="EMDB" id="EMD-11419"/>
<dbReference type="EMDB" id="EMD-11420"/>
<dbReference type="EMDB" id="EMD-11421"/>
<dbReference type="EMDB" id="EMD-11422"/>
<dbReference type="EMDB" id="EMD-11423"/>
<dbReference type="EMDB" id="EMD-11426"/>
<dbReference type="EMDB" id="EMD-11710"/>
<dbReference type="EMDB" id="EMD-11713"/>
<dbReference type="EMDB" id="EMD-11717"/>
<dbReference type="EMDB" id="EMD-11718"/>
<dbReference type="EMDB" id="EMD-12035"/>
<dbReference type="EMDB" id="EMD-12215"/>
<dbReference type="EMDB" id="EMD-12216"/>
<dbReference type="EMDB" id="EMD-12217"/>
<dbReference type="EMDB" id="EMD-12218"/>
<dbReference type="EMDB" id="EMD-12219"/>
<dbReference type="EMDB" id="EMD-12261"/>
<dbReference type="EMDB" id="EMD-12573"/>
<dbReference type="EMDB" id="EMD-12574"/>
<dbReference type="EMDB" id="EMD-12575"/>
<dbReference type="EMDB" id="EMD-12635"/>
<dbReference type="EMDB" id="EMD-12636"/>
<dbReference type="EMDB" id="EMD-12693"/>
<dbReference type="EMDB" id="EMD-12694"/>
<dbReference type="EMDB" id="EMD-12695"/>
<dbReference type="EMDB" id="EMD-12826"/>
<dbReference type="EMDB" id="EMD-12928"/>
<dbReference type="EMDB" id="EMD-12929"/>
<dbReference type="EMDB" id="EMD-12930"/>
<dbReference type="EMDB" id="EMD-12936"/>
<dbReference type="EMDB" id="EMD-12937"/>
<dbReference type="EMDB" id="EMD-13055"/>
<dbReference type="EMDB" id="EMD-13180"/>
<dbReference type="EMDB" id="EMD-13458"/>
<dbReference type="EMDB" id="EMD-13459"/>
<dbReference type="EMDB" id="EMD-13461"/>
<dbReference type="EMDB" id="EMD-13462"/>
<dbReference type="EMDB" id="EMD-13463"/>
<dbReference type="EMDB" id="EMD-13464"/>
<dbReference type="EMDB" id="EMD-13465"/>
<dbReference type="EMDB" id="EMD-13805"/>
<dbReference type="EMDB" id="EMD-13952"/>
<dbReference type="EMDB" id="EMD-13955"/>
<dbReference type="EMDB" id="EMD-13956"/>
<dbReference type="EMDB" id="EMD-13958"/>
<dbReference type="EMDB" id="EMD-14121"/>
<dbReference type="EMDB" id="EMD-14454"/>
<dbReference type="EMDB" id="EMD-14846"/>
<dbReference type="EMDB" id="EMD-14850"/>
<dbReference type="EMDB" id="EMD-14864"/>
<dbReference type="EMDB" id="EMD-14865"/>
<dbReference type="EMDB" id="EMD-14956"/>
<dbReference type="EMDB" id="EMD-15116"/>
<dbReference type="EMDB" id="EMD-15558"/>
<dbReference type="EMDB" id="EMD-15712"/>
<dbReference type="EMDB" id="EMD-15793"/>
<dbReference type="EMDB" id="EMD-15905"/>
<dbReference type="EMDB" id="EMD-16015"/>
<dbReference type="EMDB" id="EMD-16029"/>
<dbReference type="EMDB" id="EMD-16031"/>
<dbReference type="EMDB" id="EMD-16047"/>
<dbReference type="EMDB" id="EMD-16057"/>
<dbReference type="EMDB" id="EMD-16059"/>
<dbReference type="EMDB" id="EMD-16062"/>
<dbReference type="EMDB" id="EMD-16065"/>
<dbReference type="EMDB" id="EMD-16081"/>
<dbReference type="EMDB" id="EMD-16082"/>
<dbReference type="EMDB" id="EMD-16494"/>
<dbReference type="EMDB" id="EMD-16495"/>
<dbReference type="EMDB" id="EMD-16496"/>
<dbReference type="EMDB" id="EMD-16497"/>
<dbReference type="EMDB" id="EMD-16498"/>
<dbReference type="EMDB" id="EMD-16499"/>
<dbReference type="EMDB" id="EMD-16500"/>
<dbReference type="EMDB" id="EMD-16501"/>
<dbReference type="EMDB" id="EMD-16502"/>
<dbReference type="EMDB" id="EMD-16503"/>
<dbReference type="EMDB" id="EMD-16505"/>
<dbReference type="EMDB" id="EMD-16506"/>
<dbReference type="EMDB" id="EMD-16530"/>
<dbReference type="EMDB" id="EMD-16613"/>
<dbReference type="EMDB" id="EMD-16641"/>
<dbReference type="EMDB" id="EMD-16646"/>
<dbReference type="EMDB" id="EMD-16652"/>
<dbReference type="EMDB" id="EMD-17346"/>
<dbReference type="EMDB" id="EMD-17347"/>
<dbReference type="EMDB" id="EMD-17348"/>
<dbReference type="EMDB" id="EMD-17631"/>
<dbReference type="EMDB" id="EMD-17667"/>
<dbReference type="EMDB" id="EMD-17743"/>
<dbReference type="EMDB" id="EMD-17959"/>
<dbReference type="EMDB" id="EMD-18145"/>
<dbReference type="EMDB" id="EMD-18320"/>
<dbReference type="EMDB" id="EMD-18458"/>
<dbReference type="EMDB" id="EMD-18534"/>
<dbReference type="EMDB" id="EMD-18950"/>
<dbReference type="EMDB" id="EMD-19004"/>
<dbReference type="EMDB" id="EMD-19426"/>
<dbReference type="EMDB" id="EMD-19427"/>
<dbReference type="EMDB" id="EMD-19428"/>
<dbReference type="EMDB" id="EMD-19429"/>
<dbReference type="EMDB" id="EMD-20048"/>
<dbReference type="EMDB" id="EMD-20052"/>
<dbReference type="EMDB" id="EMD-21420"/>
<dbReference type="EMDB" id="EMD-21421"/>
<dbReference type="EMDB" id="EMD-21422"/>
<dbReference type="EMDB" id="EMD-21625"/>
<dbReference type="EMDB" id="EMD-21630"/>
<dbReference type="EMDB" id="EMD-21631"/>
<dbReference type="EMDB" id="EMD-21632"/>
<dbReference type="EMDB" id="EMD-21633"/>
<dbReference type="EMDB" id="EMD-21634"/>
<dbReference type="EMDB" id="EMD-21635"/>
<dbReference type="EMDB" id="EMD-21636"/>
<dbReference type="EMDB" id="EMD-21637"/>
<dbReference type="EMDB" id="EMD-21638"/>
<dbReference type="EMDB" id="EMD-21639"/>
<dbReference type="EMDB" id="EMD-21640"/>
<dbReference type="EMDB" id="EMD-21641"/>
<dbReference type="EMDB" id="EMD-21856"/>
<dbReference type="EMDB" id="EMD-21857"/>
<dbReference type="EMDB" id="EMD-21858"/>
<dbReference type="EMDB" id="EMD-22459"/>
<dbReference type="EMDB" id="EMD-22461"/>
<dbReference type="EMDB" id="EMD-22464"/>
<dbReference type="EMDB" id="EMD-22466"/>
<dbReference type="EMDB" id="EMD-22469"/>
<dbReference type="EMDB" id="EMD-22472"/>
<dbReference type="EMDB" id="EMD-22669"/>
<dbReference type="EMDB" id="EMD-22670"/>
<dbReference type="EMDB" id="EMD-22671"/>
<dbReference type="EMDB" id="EMD-22672"/>
<dbReference type="EMDB" id="EMD-22673"/>
<dbReference type="EMDB" id="EMD-22674"/>
<dbReference type="EMDB" id="EMD-23528"/>
<dbReference type="EMDB" id="EMD-24120"/>
<dbReference type="EMDB" id="EMD-24132"/>
<dbReference type="EMDB" id="EMD-24133"/>
<dbReference type="EMDB" id="EMD-24134"/>
<dbReference type="EMDB" id="EMD-24135"/>
<dbReference type="EMDB" id="EMD-24136"/>
<dbReference type="EMDB" id="EMD-24803"/>
<dbReference type="EMDB" id="EMD-25405"/>
<dbReference type="EMDB" id="EMD-25407"/>
<dbReference type="EMDB" id="EMD-25409"/>
<dbReference type="EMDB" id="EMD-25410"/>
<dbReference type="EMDB" id="EMD-25411"/>
<dbReference type="EMDB" id="EMD-25415"/>
<dbReference type="EMDB" id="EMD-25418"/>
<dbReference type="EMDB" id="EMD-25420"/>
<dbReference type="EMDB" id="EMD-25421"/>
<dbReference type="EMDB" id="EMD-30215"/>
<dbReference type="EMDB" id="EMD-30598"/>
<dbReference type="EMDB" id="EMD-30611"/>
<dbReference type="EMDB" id="EMD-33660"/>
<dbReference type="EMDB" id="EMD-33661"/>
<dbReference type="EMDB" id="EMD-33662"/>
<dbReference type="EMDB" id="EMD-33663"/>
<dbReference type="EMDB" id="EMD-33664"/>
<dbReference type="EMDB" id="EMD-33665"/>
<dbReference type="EMDB" id="EMD-33904"/>
<dbReference type="EMDB" id="EMD-3489"/>
<dbReference type="EMDB" id="EMD-3490"/>
<dbReference type="EMDB" id="EMD-3492"/>
<dbReference type="EMDB" id="EMD-3493"/>
<dbReference type="EMDB" id="EMD-35001"/>
<dbReference type="EMDB" id="EMD-35020"/>
<dbReference type="EMDB" id="EMD-35022"/>
<dbReference type="EMDB" id="EMD-3508"/>
<dbReference type="EMDB" id="EMD-35411"/>
<dbReference type="EMDB" id="EMD-35412"/>
<dbReference type="EMDB" id="EMD-35939"/>
<dbReference type="EMDB" id="EMD-3617"/>
<dbReference type="EMDB" id="EMD-3713"/>
<dbReference type="EMDB" id="EMD-37271"/>
<dbReference type="EMDB" id="EMD-3730"/>
<dbReference type="EMDB" id="EMD-3898"/>
<dbReference type="EMDB" id="EMD-3899"/>
<dbReference type="EMDB" id="EMD-3903"/>
<dbReference type="EMDB" id="EMD-39577"/>
<dbReference type="EMDB" id="EMD-39578"/>
<dbReference type="EMDB" id="EMD-39579"/>
<dbReference type="EMDB" id="EMD-39580"/>
<dbReference type="EMDB" id="EMD-39581"/>
<dbReference type="EMDB" id="EMD-4001"/>
<dbReference type="EMDB" id="EMD-4121"/>
<dbReference type="EMDB" id="EMD-4122"/>
<dbReference type="EMDB" id="EMD-4123"/>
<dbReference type="EMDB" id="EMD-4124"/>
<dbReference type="EMDB" id="EMD-4125"/>
<dbReference type="EMDB" id="EMD-4126"/>
<dbReference type="EMDB" id="EMD-4378"/>
<dbReference type="EMDB" id="EMD-4379"/>
<dbReference type="EMDB" id="EMD-4380"/>
<dbReference type="EMDB" id="EMD-4381"/>
<dbReference type="EMDB" id="EMD-4382"/>
<dbReference type="EMDB" id="EMD-4383"/>
<dbReference type="EMDB" id="EMD-4476"/>
<dbReference type="EMDB" id="EMD-4477"/>
<dbReference type="EMDB" id="EMD-4478"/>
<dbReference type="EMDB" id="EMD-45666"/>
<dbReference type="EMDB" id="EMD-4638"/>
<dbReference type="EMDB" id="EMD-50296"/>
<dbReference type="EMDB" id="EMD-51318"/>
<dbReference type="EMDB" id="EMD-51340"/>
<dbReference type="EMDB" id="EMD-51828"/>
<dbReference type="EMDB" id="EMD-51829"/>
<dbReference type="EMDB" id="EMD-51830"/>
<dbReference type="EMDB" id="EMD-51831"/>
<dbReference type="EMDB" id="EMD-51832"/>
<dbReference type="EMDB" id="EMD-51833"/>
<dbReference type="EMDB" id="EMD-51834"/>
<dbReference type="EMDB" id="EMD-51835"/>
<dbReference type="EMDB" id="EMD-51836"/>
<dbReference type="EMDB" id="EMD-51837"/>
<dbReference type="EMDB" id="EMD-51838"/>
<dbReference type="EMDB" id="EMD-51839"/>
<dbReference type="EMDB" id="EMD-51840"/>
<dbReference type="EMDB" id="EMD-51841"/>
<dbReference type="EMDB" id="EMD-51842"/>
<dbReference type="EMDB" id="EMD-51843"/>
<dbReference type="EMDB" id="EMD-51973"/>
<dbReference type="EMDB" id="EMD-51974"/>
<dbReference type="EMDB" id="EMD-51975"/>
<dbReference type="EMDB" id="EMD-51976"/>
<dbReference type="EMDB" id="EMD-51977"/>
<dbReference type="EMDB" id="EMD-51978"/>
<dbReference type="EMDB" id="EMD-51979"/>
<dbReference type="EMDB" id="EMD-51981"/>
<dbReference type="EMDB" id="EMD-51982"/>
<dbReference type="EMDB" id="EMD-51983"/>
<dbReference type="EMDB" id="EMD-6667"/>
<dbReference type="EMDB" id="EMD-7289"/>
<dbReference type="EMDB" id="EMD-7341"/>
<dbReference type="EMDB" id="EMD-8000"/>
<dbReference type="EMDB" id="EMD-8001"/>
<dbReference type="EMDB" id="EMD-8002"/>
<dbReference type="EMDB" id="EMD-8003"/>
<dbReference type="EMDB" id="EMD-8004"/>
<dbReference type="EMDB" id="EMD-8107"/>
<dbReference type="EMDB" id="EMD-8175"/>
<dbReference type="EMDB" id="EMD-8176"/>
<dbReference type="EMDB" id="EMD-8237"/>
<dbReference type="EMDB" id="EMD-8238"/>
<dbReference type="EMDB" id="EMD-8279"/>
<dbReference type="EMDB" id="EMD-8280"/>
<dbReference type="EMDB" id="EMD-8281"/>
<dbReference type="EMDB" id="EMD-8282"/>
<dbReference type="EMDB" id="EMD-8505"/>
<dbReference type="EMDB" id="EMD-8615"/>
<dbReference type="EMDB" id="EMD-8616"/>
<dbReference type="EMDB" id="EMD-8617"/>
<dbReference type="EMDB" id="EMD-8618"/>
<dbReference type="EMDB" id="EMD-8619"/>
<dbReference type="EMDB" id="EMD-8620"/>
<dbReference type="EMDB" id="EMD-8813"/>
<dbReference type="EMDB" id="EMD-8814"/>
<dbReference type="EMDB" id="EMD-8815"/>
<dbReference type="EMDB" id="EMD-8828"/>
<dbReference type="SMR" id="P0AG48"/>
<dbReference type="BioGRID" id="4261074">
    <property type="interactions" value="228"/>
</dbReference>
<dbReference type="BioGRID" id="853300">
    <property type="interactions" value="2"/>
</dbReference>
<dbReference type="ComplexPortal" id="CPX-3807">
    <property type="entry name" value="50S large ribosomal subunit"/>
</dbReference>
<dbReference type="DIP" id="DIP-47852N"/>
<dbReference type="FunCoup" id="P0AG48">
    <property type="interactions" value="1006"/>
</dbReference>
<dbReference type="IntAct" id="P0AG48">
    <property type="interactions" value="103"/>
</dbReference>
<dbReference type="STRING" id="511145.b3186"/>
<dbReference type="jPOST" id="P0AG48"/>
<dbReference type="PaxDb" id="511145-b3186"/>
<dbReference type="EnsemblBacteria" id="AAC76218">
    <property type="protein sequence ID" value="AAC76218"/>
    <property type="gene ID" value="b3186"/>
</dbReference>
<dbReference type="GeneID" id="93778795"/>
<dbReference type="GeneID" id="949057"/>
<dbReference type="KEGG" id="ecj:JW3153"/>
<dbReference type="KEGG" id="eco:b3186"/>
<dbReference type="KEGG" id="ecoc:C3026_17345"/>
<dbReference type="PATRIC" id="fig|1411691.4.peg.3545"/>
<dbReference type="EchoBASE" id="EB4295"/>
<dbReference type="eggNOG" id="COG0261">
    <property type="taxonomic scope" value="Bacteria"/>
</dbReference>
<dbReference type="HOGENOM" id="CLU_061463_3_3_6"/>
<dbReference type="InParanoid" id="P0AG48"/>
<dbReference type="OMA" id="HRQPFTK"/>
<dbReference type="OrthoDB" id="9813334at2"/>
<dbReference type="PhylomeDB" id="P0AG48"/>
<dbReference type="BioCyc" id="EcoCyc:EG50001-MONOMER"/>
<dbReference type="BioCyc" id="MetaCyc:EG50001-MONOMER"/>
<dbReference type="EvolutionaryTrace" id="P0AG48"/>
<dbReference type="PRO" id="PR:P0AG48"/>
<dbReference type="Proteomes" id="UP000000625">
    <property type="component" value="Chromosome"/>
</dbReference>
<dbReference type="GO" id="GO:0005737">
    <property type="term" value="C:cytoplasm"/>
    <property type="evidence" value="ECO:0000314"/>
    <property type="project" value="ComplexPortal"/>
</dbReference>
<dbReference type="GO" id="GO:0005829">
    <property type="term" value="C:cytosol"/>
    <property type="evidence" value="ECO:0000314"/>
    <property type="project" value="EcoCyc"/>
</dbReference>
<dbReference type="GO" id="GO:0022625">
    <property type="term" value="C:cytosolic large ribosomal subunit"/>
    <property type="evidence" value="ECO:0000314"/>
    <property type="project" value="EcoCyc"/>
</dbReference>
<dbReference type="GO" id="GO:0019843">
    <property type="term" value="F:rRNA binding"/>
    <property type="evidence" value="ECO:0007669"/>
    <property type="project" value="UniProtKB-UniRule"/>
</dbReference>
<dbReference type="GO" id="GO:0003735">
    <property type="term" value="F:structural constituent of ribosome"/>
    <property type="evidence" value="ECO:0000318"/>
    <property type="project" value="GO_Central"/>
</dbReference>
<dbReference type="GO" id="GO:0002181">
    <property type="term" value="P:cytoplasmic translation"/>
    <property type="evidence" value="ECO:0000303"/>
    <property type="project" value="ComplexPortal"/>
</dbReference>
<dbReference type="HAMAP" id="MF_01363">
    <property type="entry name" value="Ribosomal_bL21"/>
    <property type="match status" value="1"/>
</dbReference>
<dbReference type="InterPro" id="IPR028909">
    <property type="entry name" value="bL21-like"/>
</dbReference>
<dbReference type="InterPro" id="IPR036164">
    <property type="entry name" value="bL21-like_sf"/>
</dbReference>
<dbReference type="InterPro" id="IPR001787">
    <property type="entry name" value="Ribosomal_bL21"/>
</dbReference>
<dbReference type="InterPro" id="IPR018258">
    <property type="entry name" value="Ribosomal_bL21_CS"/>
</dbReference>
<dbReference type="NCBIfam" id="TIGR00061">
    <property type="entry name" value="L21"/>
    <property type="match status" value="1"/>
</dbReference>
<dbReference type="PANTHER" id="PTHR21349">
    <property type="entry name" value="50S RIBOSOMAL PROTEIN L21"/>
    <property type="match status" value="1"/>
</dbReference>
<dbReference type="PANTHER" id="PTHR21349:SF0">
    <property type="entry name" value="LARGE RIBOSOMAL SUBUNIT PROTEIN BL21M"/>
    <property type="match status" value="1"/>
</dbReference>
<dbReference type="Pfam" id="PF00829">
    <property type="entry name" value="Ribosomal_L21p"/>
    <property type="match status" value="1"/>
</dbReference>
<dbReference type="SUPFAM" id="SSF141091">
    <property type="entry name" value="L21p-like"/>
    <property type="match status" value="1"/>
</dbReference>
<dbReference type="PROSITE" id="PS01169">
    <property type="entry name" value="RIBOSOMAL_L21"/>
    <property type="match status" value="1"/>
</dbReference>
<gene>
    <name evidence="1" type="primary">rplU</name>
    <name type="ordered locus">b3186</name>
    <name type="ordered locus">JW3153</name>
</gene>
<accession>P0AG48</accession>
<accession>P02422</accession>
<accession>Q2M926</accession>
<organism>
    <name type="scientific">Escherichia coli (strain K12)</name>
    <dbReference type="NCBI Taxonomy" id="83333"/>
    <lineage>
        <taxon>Bacteria</taxon>
        <taxon>Pseudomonadati</taxon>
        <taxon>Pseudomonadota</taxon>
        <taxon>Gammaproteobacteria</taxon>
        <taxon>Enterobacterales</taxon>
        <taxon>Enterobacteriaceae</taxon>
        <taxon>Escherichia</taxon>
    </lineage>
</organism>
<proteinExistence type="evidence at protein level"/>
<name>RL21_ECOLI</name>
<feature type="chain" id="PRO_0000181000" description="Large ribosomal subunit protein bL21">
    <location>
        <begin position="1"/>
        <end position="103"/>
    </location>
</feature>
<feature type="strand" evidence="12">
    <location>
        <begin position="2"/>
        <end position="7"/>
    </location>
</feature>
<feature type="strand" evidence="12">
    <location>
        <begin position="10"/>
        <end position="14"/>
    </location>
</feature>
<feature type="strand" evidence="12">
    <location>
        <begin position="19"/>
        <end position="23"/>
    </location>
</feature>
<feature type="strand" evidence="12">
    <location>
        <begin position="32"/>
        <end position="35"/>
    </location>
</feature>
<feature type="strand" evidence="12">
    <location>
        <begin position="38"/>
        <end position="45"/>
    </location>
</feature>
<feature type="strand" evidence="12">
    <location>
        <begin position="47"/>
        <end position="49"/>
    </location>
</feature>
<feature type="strand" evidence="12">
    <location>
        <begin position="51"/>
        <end position="53"/>
    </location>
</feature>
<feature type="strand" evidence="12">
    <location>
        <begin position="58"/>
        <end position="68"/>
    </location>
</feature>
<feature type="strand" evidence="12">
    <location>
        <begin position="72"/>
        <end position="78"/>
    </location>
</feature>
<feature type="turn" evidence="12">
    <location>
        <begin position="79"/>
        <end position="82"/>
    </location>
</feature>
<feature type="strand" evidence="12">
    <location>
        <begin position="83"/>
        <end position="89"/>
    </location>
</feature>
<feature type="strand" evidence="12">
    <location>
        <begin position="92"/>
        <end position="102"/>
    </location>
</feature>
<reference key="1">
    <citation type="journal article" date="1979" name="Biochemistry">
        <title>Amino acid sequence of the ribosomal protein L21 of Escherichia coli.</title>
        <authorList>
            <person name="Heiland I."/>
            <person name="Wittmann-Liebold B."/>
        </authorList>
    </citation>
    <scope>PROTEIN SEQUENCE</scope>
    <scope>SUBUNIT</scope>
</reference>
<reference key="2">
    <citation type="journal article" date="1993" name="DNA Seq.">
        <title>Cloning and nucleotide sequencing of the genes, rpIU and rpmA, for ribosomal proteins L21 and L27 of Escherichia coli.</title>
        <authorList>
            <person name="Jeong J.H."/>
            <person name="Kitakawa M.S."/>
            <person name="Isono S."/>
            <person name="Isono K."/>
        </authorList>
    </citation>
    <scope>NUCLEOTIDE SEQUENCE [GENOMIC DNA]</scope>
    <source>
        <strain>K12 / W3110 / ATCC 27325 / DSM 5911</strain>
    </source>
</reference>
<reference key="3">
    <citation type="journal article" date="1997" name="Science">
        <title>The complete genome sequence of Escherichia coli K-12.</title>
        <authorList>
            <person name="Blattner F.R."/>
            <person name="Plunkett G. III"/>
            <person name="Bloch C.A."/>
            <person name="Perna N.T."/>
            <person name="Burland V."/>
            <person name="Riley M."/>
            <person name="Collado-Vides J."/>
            <person name="Glasner J.D."/>
            <person name="Rode C.K."/>
            <person name="Mayhew G.F."/>
            <person name="Gregor J."/>
            <person name="Davis N.W."/>
            <person name="Kirkpatrick H.A."/>
            <person name="Goeden M.A."/>
            <person name="Rose D.J."/>
            <person name="Mau B."/>
            <person name="Shao Y."/>
        </authorList>
    </citation>
    <scope>NUCLEOTIDE SEQUENCE [LARGE SCALE GENOMIC DNA]</scope>
    <source>
        <strain>K12 / MG1655 / ATCC 47076</strain>
    </source>
</reference>
<reference key="4">
    <citation type="journal article" date="2006" name="Mol. Syst. Biol.">
        <title>Highly accurate genome sequences of Escherichia coli K-12 strains MG1655 and W3110.</title>
        <authorList>
            <person name="Hayashi K."/>
            <person name="Morooka N."/>
            <person name="Yamamoto Y."/>
            <person name="Fujita K."/>
            <person name="Isono K."/>
            <person name="Choi S."/>
            <person name="Ohtsubo E."/>
            <person name="Baba T."/>
            <person name="Wanner B.L."/>
            <person name="Mori H."/>
            <person name="Horiuchi T."/>
        </authorList>
    </citation>
    <scope>NUCLEOTIDE SEQUENCE [LARGE SCALE GENOMIC DNA]</scope>
    <source>
        <strain>K12 / W3110 / ATCC 27325 / DSM 5911</strain>
    </source>
</reference>
<reference key="5">
    <citation type="submission" date="1994-09" db="UniProtKB">
        <authorList>
            <person name="Pasquali C."/>
            <person name="Sanchez J.-C."/>
            <person name="Ravier F."/>
            <person name="Golaz O."/>
            <person name="Hughes G.J."/>
            <person name="Frutiger S."/>
            <person name="Paquet N."/>
            <person name="Wilkins M."/>
            <person name="Appel R.D."/>
            <person name="Bairoch A."/>
            <person name="Hochstrasser D.F."/>
        </authorList>
    </citation>
    <scope>PROTEIN SEQUENCE OF 1-13</scope>
    <source>
        <strain>K12 / W3110 / ATCC 27325 / DSM 5911</strain>
    </source>
</reference>
<reference key="6">
    <citation type="journal article" date="1981" name="Nucleic Acids Res.">
        <title>The use of 2-iminothiolane as an RNA-protein cross-linking agent in Escherichia coli ribosomes, and the localisation on 23S RNA of sites cross-linked to proteins L4, L6, L21, L23, L27 and L29.</title>
        <authorList>
            <person name="Wower I."/>
            <person name="Wower J."/>
            <person name="Meinke M."/>
            <person name="Brimacombe R."/>
        </authorList>
    </citation>
    <scope>CROSS-LINKING TO 23S RRNA</scope>
    <source>
        <strain>MRE-600</strain>
    </source>
</reference>
<reference key="7">
    <citation type="journal article" date="1989" name="Biochemistry">
        <title>Comparative cross-linking study on the 50S ribosomal subunit from Escherichia coli.</title>
        <authorList>
            <person name="Walleczek J."/>
            <person name="Martin T."/>
            <person name="Redl B."/>
            <person name="Stoeffler-Meilicke M."/>
            <person name="Stoeffler G."/>
        </authorList>
    </citation>
    <scope>CROSS-LINKING TO L20</scope>
</reference>
<reference key="8">
    <citation type="journal article" date="1997" name="Electrophoresis">
        <title>Escherichia coli proteome analysis using the gene-protein database.</title>
        <authorList>
            <person name="VanBogelen R.A."/>
            <person name="Abshire K.Z."/>
            <person name="Moldover B."/>
            <person name="Olson E.R."/>
            <person name="Neidhardt F.C."/>
        </authorList>
    </citation>
    <scope>IDENTIFICATION BY 2D-GEL</scope>
</reference>
<reference key="9">
    <citation type="journal article" date="1999" name="Anal. Biochem.">
        <title>Observation of Escherichia coli ribosomal proteins and their posttranslational modifications by mass spectrometry.</title>
        <authorList>
            <person name="Arnold R.J."/>
            <person name="Reilly J.P."/>
        </authorList>
    </citation>
    <scope>MASS SPECTROMETRY</scope>
    <scope>SUBUNIT</scope>
    <source>
        <strain>K12 / ATCC 25404 / DSM 5698 / NCIMB 11290</strain>
    </source>
</reference>
<reference key="10">
    <citation type="journal article" date="2014" name="Curr. Opin. Struct. Biol.">
        <title>A new system for naming ribosomal proteins.</title>
        <authorList>
            <person name="Ban N."/>
            <person name="Beckmann R."/>
            <person name="Cate J.H.D."/>
            <person name="Dinman J.D."/>
            <person name="Dragon F."/>
            <person name="Ellis S.R."/>
            <person name="Lafontaine D.L.J."/>
            <person name="Lindahl L."/>
            <person name="Liljas A."/>
            <person name="Lipton J.M."/>
            <person name="McAlear M.A."/>
            <person name="Moore P.B."/>
            <person name="Noller H.F."/>
            <person name="Ortega J."/>
            <person name="Panse V.G."/>
            <person name="Ramakrishnan V."/>
            <person name="Spahn C.M.T."/>
            <person name="Steitz T.A."/>
            <person name="Tchorzewski M."/>
            <person name="Tollervey D."/>
            <person name="Warren A.J."/>
            <person name="Williamson J.R."/>
            <person name="Wilson D."/>
            <person name="Yonath A."/>
            <person name="Yusupov M."/>
        </authorList>
    </citation>
    <scope>NOMENCLATURE</scope>
</reference>
<reference key="11">
    <citation type="journal article" date="2005" name="Science">
        <title>Structures of the bacterial ribosome at 3.5 A resolution.</title>
        <authorList>
            <person name="Schuwirth B.S."/>
            <person name="Borovinskaya M.A."/>
            <person name="Hau C.W."/>
            <person name="Zhang W."/>
            <person name="Vila-Sanjurjo A."/>
            <person name="Holton J.M."/>
            <person name="Cate J.H.D."/>
        </authorList>
    </citation>
    <scope>X-RAY CRYSTALLOGRAPHY (3.46 ANGSTROMS) OF 2 DIFFERENT RIBOSOME STRUCTURES</scope>
    <scope>SUBUNIT</scope>
    <source>
        <strain>MRE-600</strain>
    </source>
</reference>
<reference key="12">
    <citation type="journal article" date="2014" name="Cell Rep.">
        <title>Molecular basis for the ribosome functioning as an L-tryptophan sensor.</title>
        <authorList>
            <person name="Bischoff L."/>
            <person name="Berninghausen O."/>
            <person name="Beckmann R."/>
        </authorList>
    </citation>
    <scope>STRUCTURE BY ELECTRON MICROSCOPY (3.80 ANGSTROMS) OF TNAC-STALLED 50S RIBOSOMAL SUBUNIT</scope>
    <scope>SUBUNIT</scope>
    <source>
        <strain>K12 / A19 / KC6</strain>
    </source>
</reference>
<reference key="13">
    <citation type="journal article" date="2014" name="PLoS Biol.">
        <title>Structural and functional insights into the mode of action of a universally conserved Obg GTPase.</title>
        <authorList>
            <person name="Feng B."/>
            <person name="Mandava C.S."/>
            <person name="Guo Q."/>
            <person name="Wang J."/>
            <person name="Cao W."/>
            <person name="Li N."/>
            <person name="Zhang Y."/>
            <person name="Zhang Y."/>
            <person name="Wang Z."/>
            <person name="Wu J."/>
            <person name="Sanyal S."/>
            <person name="Lei J."/>
            <person name="Gao N."/>
        </authorList>
    </citation>
    <scope>STRUCTURE BY ELECTRON MICROSCOPY (5.5 ANGSTROMS) OF 50S RIBOSOMAL SUBUNIT IN COMPLEX WITH OBGE AND GMP-PNP</scope>
    <scope>SUBUNIT</scope>
</reference>
<reference key="14">
    <citation type="journal article" date="2017" name="Nature">
        <title>Mechanistic insights into the alternative translation termination by ArfA and RF2.</title>
        <authorList>
            <person name="Ma C."/>
            <person name="Kurita D."/>
            <person name="Li N."/>
            <person name="Chen Y."/>
            <person name="Himeno H."/>
            <person name="Gao N."/>
        </authorList>
    </citation>
    <scope>STRUCTURE BY ELECTRON MICROSCOPY (3.0 ANGSTROMS) OF 70S RIBOSOME IN COMPLEX WITH ARFA AND RF2</scope>
    <scope>SUBUNIT</scope>
</reference>
<reference key="15">
    <citation type="journal article" date="2017" name="Nature">
        <title>Structural basis for ArfA-RF2-mediated translation termination on mRNAs lacking stop codons.</title>
        <authorList>
            <person name="Huter P."/>
            <person name="Mueller C."/>
            <person name="Beckert B."/>
            <person name="Arenz S."/>
            <person name="Berninghausen O."/>
            <person name="Beckmann R."/>
            <person name="Wilson D.N."/>
        </authorList>
    </citation>
    <scope>STRUCTURE BY ELECTRON MICROSCOPY (3.1 ANGSTROMS) OF 70S RIBOSOME IN COMPLEX WITH ARFA AND RF2</scope>
    <scope>SUBUNIT</scope>
</reference>
<reference key="16">
    <citation type="journal article" date="2016" name="Science">
        <title>Translational termination without a stop codon.</title>
        <authorList>
            <person name="James N.R."/>
            <person name="Brown A."/>
            <person name="Gordiyenko Y."/>
            <person name="Ramakrishnan V."/>
        </authorList>
    </citation>
    <scope>STRUCTURE BY ELECTRON MICROSCOPY (2.97 ANGSTROMS) OF 70S RIBOSOME IN COMPLEX WITH ARFA AND RF2</scope>
    <scope>SUBUNIT</scope>
</reference>
<reference key="17">
    <citation type="journal article" date="2017" name="Nature">
        <title>Structural basis of co-translational quality control by ArfA and RF2 bound to ribosome.</title>
        <authorList>
            <person name="Zeng F."/>
            <person name="Chen Y."/>
            <person name="Remis J."/>
            <person name="Shekhar M."/>
            <person name="Phillips J.C."/>
            <person name="Tajkhorshid E."/>
            <person name="Jin H."/>
        </authorList>
    </citation>
    <scope>STRUCTURE BY ELECTRON MICROSCOPY (3.52 ANGSTROMS) OF 70S RIBOSOME IN COMPLEX WITH ARFA AND RF2</scope>
    <scope>SUBUNIT</scope>
</reference>
<sequence>MYAVFQSGGKQHRVSEGQTVRLEKLDIATGETVEFAEVLMIANGEEVKIGVPFVDGGVIKAEVVAHGRGEKVKIVKFRRRKHYRKQQGHRQWFTDVKITGISA</sequence>
<evidence type="ECO:0000255" key="1">
    <source>
        <dbReference type="HAMAP-Rule" id="MF_01363"/>
    </source>
</evidence>
<evidence type="ECO:0000269" key="2">
    <source>
    </source>
</evidence>
<evidence type="ECO:0000269" key="3">
    <source>
    </source>
</evidence>
<evidence type="ECO:0000269" key="4">
    <source>
    </source>
</evidence>
<evidence type="ECO:0000269" key="5">
    <source>
    </source>
</evidence>
<evidence type="ECO:0000269" key="6">
    <source>
    </source>
</evidence>
<evidence type="ECO:0000269" key="7">
    <source>
    </source>
</evidence>
<evidence type="ECO:0000269" key="8">
    <source>
    </source>
</evidence>
<evidence type="ECO:0000269" key="9">
    <source>
    </source>
</evidence>
<evidence type="ECO:0000269" key="10">
    <source>
    </source>
</evidence>
<evidence type="ECO:0000303" key="11">
    <source>
    </source>
</evidence>
<evidence type="ECO:0007829" key="12">
    <source>
        <dbReference type="PDB" id="8CGK"/>
    </source>
</evidence>